<organism>
    <name type="scientific">Escherichia coli (strain K12)</name>
    <dbReference type="NCBI Taxonomy" id="83333"/>
    <lineage>
        <taxon>Bacteria</taxon>
        <taxon>Pseudomonadati</taxon>
        <taxon>Pseudomonadota</taxon>
        <taxon>Gammaproteobacteria</taxon>
        <taxon>Enterobacterales</taxon>
        <taxon>Enterobacteriaceae</taxon>
        <taxon>Escherichia</taxon>
    </lineage>
</organism>
<gene>
    <name type="primary">rplE</name>
    <name type="ordered locus">b3308</name>
    <name type="ordered locus">JW3270</name>
</gene>
<accession>P62399</accession>
<accession>P02389</accession>
<accession>Q2M6X3</accession>
<comment type="function">
    <text evidence="12 13 16">This is one of the proteins that bind and probably mediate the attachment of the 5S RNA into the large ribosomal subunit, where it forms part of the central protuberance. Its 5S rRNA binding is significantly enhanced in the presence of L18.</text>
</comment>
<comment type="function">
    <text evidence="2 3 4">In the 70S ribosome in the initiation state (PubMed:12809609) was modeled to contact protein S13 of the 30S subunit (bridge B1b), connecting the 2 subunits; the protein-protein contacts between S13 and L5 in B1b change in the model with bound EF-G implicating this bridge in subunit movement (PubMed:12809609, PubMed:18723842). In the two 3.5 A resolved ribosome structures (PubMed:16272117) the contacts between L5, S13 and S19 are different, confirming the dynamic nature of this interaction.</text>
</comment>
<comment type="function">
    <text evidence="15">Contacts the P site tRNA; the 5S rRNA and some of its associated proteins might help stabilize positioning of ribosome-bound tRNAs.</text>
</comment>
<comment type="subunit">
    <text evidence="2 3 4 7 8 9 10 11 12 13 14 15 16">Part of the 50S ribosomal subunit (PubMed:791672, PubMed:12809609, PubMed:12859903, PubMed:16272117, PubMed:25310980, PubMed:24844575, PubMed:27934701, PubMed:27906160, PubMed:27906161); part of the 5S rRNA/L5/L18/L25 subcomplex (PubMed:354687, PubMed:8925931). Contacts the 5S rRNA; cross-links to the P site tRNA (PubMed:8925931). Forms a bridge to the 30S subunit in the 70S ribosome, contacting protein S13 and S19.</text>
</comment>
<comment type="mass spectrometry" mass="20169.8" method="MALDI" evidence="1"/>
<comment type="miscellaneous">
    <text evidence="5">Identified as a multicopy suppressor of the slow growth phenotype of an rsgA (yjeQ) deletion mutant.</text>
</comment>
<comment type="similarity">
    <text evidence="18">Belongs to the universal ribosomal protein uL5 family.</text>
</comment>
<evidence type="ECO:0000269" key="1">
    <source>
    </source>
</evidence>
<evidence type="ECO:0000269" key="2">
    <source>
    </source>
</evidence>
<evidence type="ECO:0000269" key="3">
    <source>
    </source>
</evidence>
<evidence type="ECO:0000269" key="4">
    <source>
    </source>
</evidence>
<evidence type="ECO:0000269" key="5">
    <source>
    </source>
</evidence>
<evidence type="ECO:0000269" key="6">
    <source>
    </source>
</evidence>
<evidence type="ECO:0000269" key="7">
    <source>
    </source>
</evidence>
<evidence type="ECO:0000269" key="8">
    <source>
    </source>
</evidence>
<evidence type="ECO:0000269" key="9">
    <source>
    </source>
</evidence>
<evidence type="ECO:0000269" key="10">
    <source>
    </source>
</evidence>
<evidence type="ECO:0000269" key="11">
    <source>
    </source>
</evidence>
<evidence type="ECO:0000269" key="12">
    <source>
    </source>
</evidence>
<evidence type="ECO:0000269" key="13">
    <source>
    </source>
</evidence>
<evidence type="ECO:0000269" key="14">
    <source>
    </source>
</evidence>
<evidence type="ECO:0000269" key="15">
    <source>
    </source>
</evidence>
<evidence type="ECO:0000269" key="16">
    <source>
    </source>
</evidence>
<evidence type="ECO:0000303" key="17">
    <source>
    </source>
</evidence>
<evidence type="ECO:0000305" key="18"/>
<evidence type="ECO:0007829" key="19">
    <source>
        <dbReference type="PDB" id="6XZ7"/>
    </source>
</evidence>
<evidence type="ECO:0007829" key="20">
    <source>
        <dbReference type="PDB" id="8ANA"/>
    </source>
</evidence>
<evidence type="ECO:0007829" key="21">
    <source>
        <dbReference type="PDB" id="8CEU"/>
    </source>
</evidence>
<evidence type="ECO:0007829" key="22">
    <source>
        <dbReference type="PDB" id="8CGD"/>
    </source>
</evidence>
<evidence type="ECO:0007829" key="23">
    <source>
        <dbReference type="PDB" id="8G6X"/>
    </source>
</evidence>
<evidence type="ECO:0007829" key="24">
    <source>
        <dbReference type="PDB" id="8G6Y"/>
    </source>
</evidence>
<protein>
    <recommendedName>
        <fullName evidence="17">Large ribosomal subunit protein uL5</fullName>
    </recommendedName>
    <alternativeName>
        <fullName>50S ribosomal protein L5</fullName>
    </alternativeName>
</protein>
<proteinExistence type="evidence at protein level"/>
<sequence length="179" mass="20302">MAKLHDYYKDEVVKKLMTEFNYNSVMQVPRVEKITLNMGVGEAIADKKLLDNAAADLAAISGQKPLITKARKSVAGFKIRQGYPIGCKVTLRGERMWEFFERLITIAVPRIRDFRGLSAKSFDGRGNYSMGVREQIIFPEIDYDKVDRVRGLDITITTTAKSDEEGRALLAAFDFPFRK</sequence>
<name>RL5_ECOLI</name>
<reference key="1">
    <citation type="journal article" date="1983" name="Nucleic Acids Res.">
        <title>The spc ribosomal protein operon of Escherichia coli: sequence and cotranscription of the ribosomal protein genes and a protein export gene.</title>
        <authorList>
            <person name="Cerretti D.P."/>
            <person name="Dean D."/>
            <person name="Davis G.R."/>
            <person name="Bedwell D.M."/>
            <person name="Nomura M."/>
        </authorList>
    </citation>
    <scope>NUCLEOTIDE SEQUENCE [GENOMIC DNA]</scope>
    <source>
        <strain>K12</strain>
    </source>
</reference>
<reference key="2">
    <citation type="journal article" date="1997" name="Science">
        <title>The complete genome sequence of Escherichia coli K-12.</title>
        <authorList>
            <person name="Blattner F.R."/>
            <person name="Plunkett G. III"/>
            <person name="Bloch C.A."/>
            <person name="Perna N.T."/>
            <person name="Burland V."/>
            <person name="Riley M."/>
            <person name="Collado-Vides J."/>
            <person name="Glasner J.D."/>
            <person name="Rode C.K."/>
            <person name="Mayhew G.F."/>
            <person name="Gregor J."/>
            <person name="Davis N.W."/>
            <person name="Kirkpatrick H.A."/>
            <person name="Goeden M.A."/>
            <person name="Rose D.J."/>
            <person name="Mau B."/>
            <person name="Shao Y."/>
        </authorList>
    </citation>
    <scope>NUCLEOTIDE SEQUENCE [LARGE SCALE GENOMIC DNA]</scope>
    <source>
        <strain>K12 / MG1655 / ATCC 47076</strain>
    </source>
</reference>
<reference key="3">
    <citation type="journal article" date="2006" name="Mol. Syst. Biol.">
        <title>Highly accurate genome sequences of Escherichia coli K-12 strains MG1655 and W3110.</title>
        <authorList>
            <person name="Hayashi K."/>
            <person name="Morooka N."/>
            <person name="Yamamoto Y."/>
            <person name="Fujita K."/>
            <person name="Isono K."/>
            <person name="Choi S."/>
            <person name="Ohtsubo E."/>
            <person name="Baba T."/>
            <person name="Wanner B.L."/>
            <person name="Mori H."/>
            <person name="Horiuchi T."/>
        </authorList>
    </citation>
    <scope>NUCLEOTIDE SEQUENCE [LARGE SCALE GENOMIC DNA]</scope>
    <source>
        <strain>K12 / W3110 / ATCC 27325 / DSM 5911</strain>
    </source>
</reference>
<reference key="4">
    <citation type="journal article" date="1976" name="FEBS Lett.">
        <title>The primary structure of the 5 S RNA binding protein L5 of Escherichia coli ribosomes.</title>
        <authorList>
            <person name="Chen R."/>
            <person name="Ehrke G."/>
        </authorList>
    </citation>
    <scope>PROTEIN SEQUENCE OF 2-179</scope>
    <scope>SUBUNIT</scope>
    <source>
        <strain>K</strain>
    </source>
</reference>
<reference key="5">
    <citation type="journal article" date="1981" name="Nucleic Acids Res.">
        <title>Translational regulation by ribosomal protein S8 in Escherichia coli: structural homology between rRNA binding site and feedback target on mRNA.</title>
        <authorList>
            <person name="Olins P.O."/>
            <person name="Nomura M."/>
        </authorList>
    </citation>
    <scope>NUCLEOTIDE SEQUENCE [GENOMIC DNA] OF 1-18</scope>
    <source>
        <strain>K12 / JM105 / ATCC 47016</strain>
    </source>
</reference>
<reference key="6">
    <citation type="journal article" date="1978" name="Biochemistry">
        <title>Stoichiometry, cooperativity, and stability of interactions between 5S RNA and proteins L5, L18, and L25 from the 50S ribosomal subunit of Escherichia coli.</title>
        <authorList>
            <person name="Spierer P."/>
            <person name="Zimmermann R.A."/>
        </authorList>
    </citation>
    <scope>FORMATION OF THE 5S RRNA/L5/L18/L25 SUBCOMPLEX</scope>
    <source>
        <strain>MRE-600</strain>
    </source>
</reference>
<reference key="7">
    <citation type="journal article" date="1982" name="Proc. Natl. Acad. Sci. U.S.A.">
        <title>Assembly map of the large subunit (50S) of Escherichia coli ribosomes.</title>
        <authorList>
            <person name="Rohl R."/>
            <person name="Nierhaus K.H."/>
        </authorList>
    </citation>
    <scope>REQUIREMENT FOR INCORPORATION OF 5S RRNA INTO THE 50S SUBUNIT</scope>
    <source>
        <strain>MRE-600</strain>
    </source>
</reference>
<reference key="8">
    <citation type="journal article" date="1995" name="Nucleic Acids Res.">
        <title>The ribosomal neighbourhood of the central fold of tRNA: cross-links from position 47 of tRNA located at the A, P or E site.</title>
        <authorList>
            <person name="Osswald M."/>
            <person name="Doering T."/>
            <person name="Brimacombe R."/>
        </authorList>
    </citation>
    <scope>CROSS-LINKING TO THE TRNA CENTRAL FOLD</scope>
    <source>
        <strain>MRE-600</strain>
    </source>
</reference>
<reference key="9">
    <citation type="journal article" date="1996" name="FEBS Lett.">
        <title>5S rRNA sugar-phosphate backbone protection in complexes with specific ribosomal proteins.</title>
        <authorList>
            <person name="Shpanchenko O.V."/>
            <person name="Zvereva M.I."/>
            <person name="Dontsova O.A."/>
            <person name="Nierhaus K.H."/>
            <person name="Bogdanov A.A."/>
        </authorList>
    </citation>
    <scope>CHARACTERIZATION OF A 5S RRNA/L5/L18/L25 SUBCOMPLEX</scope>
    <source>
        <strain>K12 / A19</strain>
    </source>
</reference>
<reference key="10">
    <citation type="journal article" date="1997" name="Electrophoresis">
        <title>Escherichia coli proteome analysis using the gene-protein database.</title>
        <authorList>
            <person name="VanBogelen R.A."/>
            <person name="Abshire K.Z."/>
            <person name="Moldover B."/>
            <person name="Olson E.R."/>
            <person name="Neidhardt F.C."/>
        </authorList>
    </citation>
    <scope>IDENTIFICATION BY 2D-GEL</scope>
</reference>
<reference key="11">
    <citation type="journal article" date="1999" name="Anal. Biochem.">
        <title>Observation of Escherichia coli ribosomal proteins and their posttranslational modifications by mass spectrometry.</title>
        <authorList>
            <person name="Arnold R.J."/>
            <person name="Reilly J.P."/>
        </authorList>
    </citation>
    <scope>MASS SPECTROMETRY</scope>
    <scope>SUBUNIT</scope>
    <source>
        <strain>K12 / ATCC 25404 / DSM 5698 / NCIMB 11290</strain>
    </source>
</reference>
<reference key="12">
    <citation type="journal article" date="2008" name="J. Bacteriol.">
        <title>Genetic interaction screens with ordered overexpression and deletion clone sets implicate the Escherichia coli GTPase YjeQ in late ribosome biogenesis.</title>
        <authorList>
            <person name="Campbell T.L."/>
            <person name="Brown E.D."/>
        </authorList>
    </citation>
    <scope>PARTIALLY SUPPRESSES AN RSGA MUTANT</scope>
    <source>
        <strain>K12</strain>
    </source>
</reference>
<reference key="13">
    <citation type="journal article" date="2009" name="Mol. Cell. Proteomics">
        <title>Lysine acetylation is a highly abundant and evolutionarily conserved modification in Escherichia coli.</title>
        <authorList>
            <person name="Zhang J."/>
            <person name="Sprung R."/>
            <person name="Pei J."/>
            <person name="Tan X."/>
            <person name="Kim S."/>
            <person name="Zhu H."/>
            <person name="Liu C.F."/>
            <person name="Grishin N.V."/>
            <person name="Zhao Y."/>
        </authorList>
    </citation>
    <scope>ACETYLATION [LARGE SCALE ANALYSIS] AT LYS-3</scope>
    <scope>IDENTIFICATION BY MASS SPECTROMETRY</scope>
    <source>
        <strain>K12 / JW1106</strain>
        <strain>K12 / MG1655 / ATCC 47076</strain>
    </source>
</reference>
<reference key="14">
    <citation type="journal article" date="2014" name="Curr. Opin. Struct. Biol.">
        <title>A new system for naming ribosomal proteins.</title>
        <authorList>
            <person name="Ban N."/>
            <person name="Beckmann R."/>
            <person name="Cate J.H.D."/>
            <person name="Dinman J.D."/>
            <person name="Dragon F."/>
            <person name="Ellis S.R."/>
            <person name="Lafontaine D.L.J."/>
            <person name="Lindahl L."/>
            <person name="Liljas A."/>
            <person name="Lipton J.M."/>
            <person name="McAlear M.A."/>
            <person name="Moore P.B."/>
            <person name="Noller H.F."/>
            <person name="Ortega J."/>
            <person name="Panse V.G."/>
            <person name="Ramakrishnan V."/>
            <person name="Spahn C.M.T."/>
            <person name="Steitz T.A."/>
            <person name="Tchorzewski M."/>
            <person name="Tollervey D."/>
            <person name="Warren A.J."/>
            <person name="Williamson J.R."/>
            <person name="Wilson D."/>
            <person name="Yonath A."/>
            <person name="Yusupov M."/>
        </authorList>
    </citation>
    <scope>NOMENCLATURE</scope>
</reference>
<reference key="15">
    <citation type="journal article" date="2003" name="Cell">
        <title>Study of the structural dynamics of the E. coli 70S ribosome using real-space refinement.</title>
        <authorList>
            <person name="Gao H."/>
            <person name="Sengupta J."/>
            <person name="Valle M."/>
            <person name="Korostelev A."/>
            <person name="Eswar N."/>
            <person name="Stagg S.M."/>
            <person name="Van Roey P."/>
            <person name="Agrawal R.K."/>
            <person name="Harvey S.C."/>
            <person name="Sali A."/>
            <person name="Chapman M.S."/>
            <person name="Frank J."/>
        </authorList>
    </citation>
    <scope>STRUCTURE BY ELECTRON MICROSCOPY (11.50 ANGSTROMS)</scope>
    <scope>SUBUNIT</scope>
    <scope>INTERSUBUNIT BRIDGE FORMATION</scope>
    <source>
        <strain>MRE-600</strain>
    </source>
</reference>
<reference key="16">
    <citation type="journal article" date="2003" name="Cell">
        <title>Locking and unlocking of ribosomal motions.</title>
        <authorList>
            <person name="Valle M."/>
            <person name="Zavialov A."/>
            <person name="Sengupta J."/>
            <person name="Rawat U."/>
            <person name="Ehrenberg M."/>
            <person name="Frank J."/>
        </authorList>
    </citation>
    <scope>3D-STRUCTURE MODELING OF RIBOSOMAL COMPLEXES INCLUDING BRIDGE CHANGES UPON TRANSLOCATION</scope>
    <scope>SUBUNIT</scope>
</reference>
<reference key="17">
    <citation type="journal article" date="2005" name="Science">
        <title>Structures of the bacterial ribosome at 3.5 A resolution.</title>
        <authorList>
            <person name="Schuwirth B.S."/>
            <person name="Borovinskaya M.A."/>
            <person name="Hau C.W."/>
            <person name="Zhang W."/>
            <person name="Vila-Sanjurjo A."/>
            <person name="Holton J.M."/>
            <person name="Cate J.H.D."/>
        </authorList>
    </citation>
    <scope>X-RAY CRYSTALLOGRAPHY (3.46 ANGSTROMS) OF 2 DIFFERENT RIBOSOME STRUCTURES INCLUDING 2 CONFORMATIONS OF INTERSUBUNIT BRIDGE B1B</scope>
    <scope>SUBUNIT</scope>
</reference>
<reference key="18">
    <citation type="journal article" date="2014" name="Cell Rep.">
        <title>Molecular basis for the ribosome functioning as an L-tryptophan sensor.</title>
        <authorList>
            <person name="Bischoff L."/>
            <person name="Berninghausen O."/>
            <person name="Beckmann R."/>
        </authorList>
    </citation>
    <scope>STRUCTURE BY ELECTRON MICROSCOPY (3.80 ANGSTROMS) OF 2-178 IN TNAC-STALLED 50S RIBOSOMAL SUBUNIT</scope>
    <scope>SUBUNIT</scope>
    <source>
        <strain>K12 / A19 / KC6</strain>
    </source>
</reference>
<reference key="19">
    <citation type="journal article" date="2014" name="PLoS Biol.">
        <title>Structural and functional insights into the mode of action of a universally conserved Obg GTPase.</title>
        <authorList>
            <person name="Feng B."/>
            <person name="Mandava C.S."/>
            <person name="Guo Q."/>
            <person name="Wang J."/>
            <person name="Cao W."/>
            <person name="Li N."/>
            <person name="Zhang Y."/>
            <person name="Zhang Y."/>
            <person name="Wang Z."/>
            <person name="Wu J."/>
            <person name="Sanyal S."/>
            <person name="Lei J."/>
            <person name="Gao N."/>
        </authorList>
    </citation>
    <scope>STRUCTURE BY ELECTRON MICROSCOPY (5.5 ANGSTROMS) OF 2-179 OF 50S RIBOSOMAL SUBUNIT IN COMPLEX WITH OBGE AND GMP-PNP</scope>
    <scope>SUBUNIT</scope>
</reference>
<reference key="20">
    <citation type="journal article" date="2017" name="Nature">
        <title>Mechanistic insights into the alternative translation termination by ArfA and RF2.</title>
        <authorList>
            <person name="Ma C."/>
            <person name="Kurita D."/>
            <person name="Li N."/>
            <person name="Chen Y."/>
            <person name="Himeno H."/>
            <person name="Gao N."/>
        </authorList>
    </citation>
    <scope>STRUCTURE BY ELECTRON MICROSCOPY (3.0 ANGSTROMS) OF 70S RIBOSOME IN COMPLEX WITH ARFA AND RF2</scope>
    <scope>SUBUNIT</scope>
</reference>
<reference key="21">
    <citation type="journal article" date="2017" name="Nature">
        <title>Structural basis for ArfA-RF2-mediated translation termination on mRNAs lacking stop codons.</title>
        <authorList>
            <person name="Huter P."/>
            <person name="Mueller C."/>
            <person name="Beckert B."/>
            <person name="Arenz S."/>
            <person name="Berninghausen O."/>
            <person name="Beckmann R."/>
            <person name="Wilson D.N."/>
        </authorList>
    </citation>
    <scope>STRUCTURE BY ELECTRON MICROSCOPY (3.1 ANGSTROMS) OF 70S RIBOSOME IN COMPLEX WITH ARFA AND RF2</scope>
    <scope>SUBUNIT</scope>
</reference>
<reference key="22">
    <citation type="journal article" date="2016" name="Science">
        <title>Translational termination without a stop codon.</title>
        <authorList>
            <person name="James N.R."/>
            <person name="Brown A."/>
            <person name="Gordiyenko Y."/>
            <person name="Ramakrishnan V."/>
        </authorList>
    </citation>
    <scope>STRUCTURE BY ELECTRON MICROSCOPY (2.97 ANGSTROMS) OF 70S RIBOSOME IN COMPLEX WITH ARFA AND RF2</scope>
    <scope>SUBUNIT</scope>
</reference>
<reference key="23">
    <citation type="journal article" date="2017" name="Nature">
        <title>Structural basis of co-translational quality control by ArfA and RF2 bound to ribosome.</title>
        <authorList>
            <person name="Zeng F."/>
            <person name="Chen Y."/>
            <person name="Remis J."/>
            <person name="Shekhar M."/>
            <person name="Phillips J.C."/>
            <person name="Tajkhorshid E."/>
            <person name="Jin H."/>
        </authorList>
    </citation>
    <scope>STRUCTURE BY ELECTRON MICROSCOPY (3.52 ANGSTROMS) OF 70S RIBOSOME IN COMPLEX WITH ARFA AND RF2</scope>
    <scope>SUBUNIT</scope>
</reference>
<dbReference type="EMBL" id="X01563">
    <property type="protein sequence ID" value="CAA25717.1"/>
    <property type="molecule type" value="Genomic_DNA"/>
</dbReference>
<dbReference type="EMBL" id="U18997">
    <property type="protein sequence ID" value="AAA58105.1"/>
    <property type="molecule type" value="Genomic_DNA"/>
</dbReference>
<dbReference type="EMBL" id="U00096">
    <property type="protein sequence ID" value="AAC76333.1"/>
    <property type="molecule type" value="Genomic_DNA"/>
</dbReference>
<dbReference type="EMBL" id="AP009048">
    <property type="protein sequence ID" value="BAE77983.1"/>
    <property type="molecule type" value="Genomic_DNA"/>
</dbReference>
<dbReference type="EMBL" id="M10195">
    <property type="protein sequence ID" value="AAA24051.1"/>
    <property type="molecule type" value="Genomic_DNA"/>
</dbReference>
<dbReference type="PIR" id="G65123">
    <property type="entry name" value="R5EC5"/>
</dbReference>
<dbReference type="RefSeq" id="NP_417767.1">
    <property type="nucleotide sequence ID" value="NC_000913.3"/>
</dbReference>
<dbReference type="RefSeq" id="WP_001096200.1">
    <property type="nucleotide sequence ID" value="NZ_STEB01000038.1"/>
</dbReference>
<dbReference type="PDB" id="1ML5">
    <property type="method" value="EM"/>
    <property type="resolution" value="14.00 A"/>
    <property type="chains" value="g=2-177"/>
</dbReference>
<dbReference type="PDB" id="2J28">
    <property type="method" value="EM"/>
    <property type="resolution" value="8.00 A"/>
    <property type="chains" value="F=2-179"/>
</dbReference>
<dbReference type="PDB" id="2RDO">
    <property type="method" value="EM"/>
    <property type="resolution" value="9.10 A"/>
    <property type="chains" value="F=2-179"/>
</dbReference>
<dbReference type="PDB" id="3BBX">
    <property type="method" value="EM"/>
    <property type="resolution" value="10.00 A"/>
    <property type="chains" value="F=2-179"/>
</dbReference>
<dbReference type="PDB" id="3J5L">
    <property type="method" value="EM"/>
    <property type="resolution" value="6.60 A"/>
    <property type="chains" value="F=2-178"/>
</dbReference>
<dbReference type="PDB" id="3J5S">
    <property type="method" value="EM"/>
    <property type="resolution" value="7.50 A"/>
    <property type="chains" value="G=2-179"/>
</dbReference>
<dbReference type="PDB" id="3J7Z">
    <property type="method" value="EM"/>
    <property type="resolution" value="3.90 A"/>
    <property type="chains" value="F=1-179"/>
</dbReference>
<dbReference type="PDB" id="3J8G">
    <property type="method" value="EM"/>
    <property type="resolution" value="5.00 A"/>
    <property type="chains" value="F=1-179"/>
</dbReference>
<dbReference type="PDB" id="3J9Y">
    <property type="method" value="EM"/>
    <property type="resolution" value="3.90 A"/>
    <property type="chains" value="F=1-179"/>
</dbReference>
<dbReference type="PDB" id="3J9Z">
    <property type="method" value="EM"/>
    <property type="resolution" value="3.60 A"/>
    <property type="chains" value="L7=2-179"/>
</dbReference>
<dbReference type="PDB" id="3JA1">
    <property type="method" value="EM"/>
    <property type="resolution" value="3.60 A"/>
    <property type="chains" value="LG=2-179"/>
</dbReference>
<dbReference type="PDB" id="3JBU">
    <property type="method" value="EM"/>
    <property type="resolution" value="3.64 A"/>
    <property type="chains" value="f=1-179"/>
</dbReference>
<dbReference type="PDB" id="3JBV">
    <property type="method" value="EM"/>
    <property type="resolution" value="3.32 A"/>
    <property type="chains" value="f=1-179"/>
</dbReference>
<dbReference type="PDB" id="3JCD">
    <property type="method" value="EM"/>
    <property type="resolution" value="3.70 A"/>
    <property type="chains" value="F=1-179"/>
</dbReference>
<dbReference type="PDB" id="3JCE">
    <property type="method" value="EM"/>
    <property type="resolution" value="3.20 A"/>
    <property type="chains" value="F=1-179"/>
</dbReference>
<dbReference type="PDB" id="3JCJ">
    <property type="method" value="EM"/>
    <property type="resolution" value="3.70 A"/>
    <property type="chains" value="E=1-179"/>
</dbReference>
<dbReference type="PDB" id="3JCN">
    <property type="method" value="EM"/>
    <property type="resolution" value="4.60 A"/>
    <property type="chains" value="F=1-179"/>
</dbReference>
<dbReference type="PDB" id="4CSU">
    <property type="method" value="EM"/>
    <property type="resolution" value="5.50 A"/>
    <property type="chains" value="F=2-179"/>
</dbReference>
<dbReference type="PDB" id="4U1U">
    <property type="method" value="X-ray"/>
    <property type="resolution" value="2.95 A"/>
    <property type="chains" value="BF/DF=2-178"/>
</dbReference>
<dbReference type="PDB" id="4U1V">
    <property type="method" value="X-ray"/>
    <property type="resolution" value="3.00 A"/>
    <property type="chains" value="BF/DF=2-178"/>
</dbReference>
<dbReference type="PDB" id="4U20">
    <property type="method" value="X-ray"/>
    <property type="resolution" value="2.90 A"/>
    <property type="chains" value="BF/DF=2-178"/>
</dbReference>
<dbReference type="PDB" id="4U24">
    <property type="method" value="X-ray"/>
    <property type="resolution" value="2.90 A"/>
    <property type="chains" value="BF/DF=2-178"/>
</dbReference>
<dbReference type="PDB" id="4U25">
    <property type="method" value="X-ray"/>
    <property type="resolution" value="2.90 A"/>
    <property type="chains" value="BF/DF=2-178"/>
</dbReference>
<dbReference type="PDB" id="4U26">
    <property type="method" value="X-ray"/>
    <property type="resolution" value="2.80 A"/>
    <property type="chains" value="BF/DF=2-178"/>
</dbReference>
<dbReference type="PDB" id="4U27">
    <property type="method" value="X-ray"/>
    <property type="resolution" value="2.80 A"/>
    <property type="chains" value="BF/DF=2-178"/>
</dbReference>
<dbReference type="PDB" id="4UY8">
    <property type="method" value="EM"/>
    <property type="resolution" value="3.80 A"/>
    <property type="chains" value="F=2-178"/>
</dbReference>
<dbReference type="PDB" id="4V47">
    <property type="method" value="EM"/>
    <property type="resolution" value="12.30 A"/>
    <property type="chains" value="AD=2-179"/>
</dbReference>
<dbReference type="PDB" id="4V48">
    <property type="method" value="EM"/>
    <property type="resolution" value="11.50 A"/>
    <property type="chains" value="AD=2-179"/>
</dbReference>
<dbReference type="PDB" id="4V4H">
    <property type="method" value="X-ray"/>
    <property type="resolution" value="3.46 A"/>
    <property type="chains" value="BF/DF=1-179"/>
</dbReference>
<dbReference type="PDB" id="4V4Q">
    <property type="method" value="X-ray"/>
    <property type="resolution" value="3.46 A"/>
    <property type="chains" value="BF/DF=2-179"/>
</dbReference>
<dbReference type="PDB" id="4V4V">
    <property type="method" value="EM"/>
    <property type="resolution" value="15.00 A"/>
    <property type="chains" value="BD=3-179"/>
</dbReference>
<dbReference type="PDB" id="4V4W">
    <property type="method" value="EM"/>
    <property type="resolution" value="15.00 A"/>
    <property type="chains" value="BD=3-179"/>
</dbReference>
<dbReference type="PDB" id="4V50">
    <property type="method" value="X-ray"/>
    <property type="resolution" value="3.22 A"/>
    <property type="chains" value="BF/DF=2-179"/>
</dbReference>
<dbReference type="PDB" id="4V52">
    <property type="method" value="X-ray"/>
    <property type="resolution" value="3.21 A"/>
    <property type="chains" value="BF/DF=2-179"/>
</dbReference>
<dbReference type="PDB" id="4V53">
    <property type="method" value="X-ray"/>
    <property type="resolution" value="3.54 A"/>
    <property type="chains" value="BF/DF=2-179"/>
</dbReference>
<dbReference type="PDB" id="4V54">
    <property type="method" value="X-ray"/>
    <property type="resolution" value="3.30 A"/>
    <property type="chains" value="BF/DF=2-179"/>
</dbReference>
<dbReference type="PDB" id="4V55">
    <property type="method" value="X-ray"/>
    <property type="resolution" value="4.00 A"/>
    <property type="chains" value="BF/DF=2-179"/>
</dbReference>
<dbReference type="PDB" id="4V56">
    <property type="method" value="X-ray"/>
    <property type="resolution" value="3.93 A"/>
    <property type="chains" value="BF/DF=2-179"/>
</dbReference>
<dbReference type="PDB" id="4V57">
    <property type="method" value="X-ray"/>
    <property type="resolution" value="3.50 A"/>
    <property type="chains" value="BF/DF=2-179"/>
</dbReference>
<dbReference type="PDB" id="4V5B">
    <property type="method" value="X-ray"/>
    <property type="resolution" value="3.74 A"/>
    <property type="chains" value="AF/CF=2-179"/>
</dbReference>
<dbReference type="PDB" id="4V5H">
    <property type="method" value="EM"/>
    <property type="resolution" value="5.80 A"/>
    <property type="chains" value="BF=2-179"/>
</dbReference>
<dbReference type="PDB" id="4V5Y">
    <property type="method" value="X-ray"/>
    <property type="resolution" value="4.45 A"/>
    <property type="chains" value="BF/DF=2-179"/>
</dbReference>
<dbReference type="PDB" id="4V64">
    <property type="method" value="X-ray"/>
    <property type="resolution" value="3.50 A"/>
    <property type="chains" value="BF/DF=2-179"/>
</dbReference>
<dbReference type="PDB" id="4V65">
    <property type="method" value="EM"/>
    <property type="resolution" value="9.00 A"/>
    <property type="chains" value="B2=2-179"/>
</dbReference>
<dbReference type="PDB" id="4V66">
    <property type="method" value="EM"/>
    <property type="resolution" value="9.00 A"/>
    <property type="chains" value="B2=2-179"/>
</dbReference>
<dbReference type="PDB" id="4V69">
    <property type="method" value="EM"/>
    <property type="resolution" value="6.70 A"/>
    <property type="chains" value="BF=2-179"/>
</dbReference>
<dbReference type="PDB" id="4V6C">
    <property type="method" value="X-ray"/>
    <property type="resolution" value="3.19 A"/>
    <property type="chains" value="BF/DF=1-179"/>
</dbReference>
<dbReference type="PDB" id="4V6D">
    <property type="method" value="X-ray"/>
    <property type="resolution" value="3.81 A"/>
    <property type="chains" value="BF/DF=1-179"/>
</dbReference>
<dbReference type="PDB" id="4V6E">
    <property type="method" value="X-ray"/>
    <property type="resolution" value="3.71 A"/>
    <property type="chains" value="BF/DF=1-179"/>
</dbReference>
<dbReference type="PDB" id="4V6K">
    <property type="method" value="EM"/>
    <property type="resolution" value="8.25 A"/>
    <property type="chains" value="AG=1-179"/>
</dbReference>
<dbReference type="PDB" id="4V6L">
    <property type="method" value="EM"/>
    <property type="resolution" value="13.20 A"/>
    <property type="chains" value="BG=1-179"/>
</dbReference>
<dbReference type="PDB" id="4V6M">
    <property type="method" value="EM"/>
    <property type="resolution" value="7.10 A"/>
    <property type="chains" value="BF=2-179"/>
</dbReference>
<dbReference type="PDB" id="4V6N">
    <property type="method" value="EM"/>
    <property type="resolution" value="12.10 A"/>
    <property type="chains" value="AG=2-179"/>
</dbReference>
<dbReference type="PDB" id="4V6O">
    <property type="method" value="EM"/>
    <property type="resolution" value="14.70 A"/>
    <property type="chains" value="BG=2-179"/>
</dbReference>
<dbReference type="PDB" id="4V6P">
    <property type="method" value="EM"/>
    <property type="resolution" value="13.50 A"/>
    <property type="chains" value="BG=2-179"/>
</dbReference>
<dbReference type="PDB" id="4V6Q">
    <property type="method" value="EM"/>
    <property type="resolution" value="11.50 A"/>
    <property type="chains" value="BG=2-179"/>
</dbReference>
<dbReference type="PDB" id="4V6R">
    <property type="method" value="EM"/>
    <property type="resolution" value="11.50 A"/>
    <property type="chains" value="BG=2-179"/>
</dbReference>
<dbReference type="PDB" id="4V6S">
    <property type="method" value="EM"/>
    <property type="resolution" value="13.10 A"/>
    <property type="chains" value="AG=2-179"/>
</dbReference>
<dbReference type="PDB" id="4V6T">
    <property type="method" value="EM"/>
    <property type="resolution" value="8.30 A"/>
    <property type="chains" value="BF=2-178"/>
</dbReference>
<dbReference type="PDB" id="4V6V">
    <property type="method" value="EM"/>
    <property type="resolution" value="9.80 A"/>
    <property type="chains" value="BG=2-179"/>
</dbReference>
<dbReference type="PDB" id="4V6Y">
    <property type="method" value="EM"/>
    <property type="resolution" value="12.00 A"/>
    <property type="chains" value="BF=1-179"/>
</dbReference>
<dbReference type="PDB" id="4V6Z">
    <property type="method" value="EM"/>
    <property type="resolution" value="12.00 A"/>
    <property type="chains" value="BF=1-179"/>
</dbReference>
<dbReference type="PDB" id="4V70">
    <property type="method" value="EM"/>
    <property type="resolution" value="17.00 A"/>
    <property type="chains" value="BF=1-179"/>
</dbReference>
<dbReference type="PDB" id="4V71">
    <property type="method" value="EM"/>
    <property type="resolution" value="20.00 A"/>
    <property type="chains" value="BF=1-179"/>
</dbReference>
<dbReference type="PDB" id="4V72">
    <property type="method" value="EM"/>
    <property type="resolution" value="13.00 A"/>
    <property type="chains" value="BF=1-179"/>
</dbReference>
<dbReference type="PDB" id="4V73">
    <property type="method" value="EM"/>
    <property type="resolution" value="15.00 A"/>
    <property type="chains" value="BF=1-179"/>
</dbReference>
<dbReference type="PDB" id="4V74">
    <property type="method" value="EM"/>
    <property type="resolution" value="17.00 A"/>
    <property type="chains" value="BF=1-179"/>
</dbReference>
<dbReference type="PDB" id="4V75">
    <property type="method" value="EM"/>
    <property type="resolution" value="12.00 A"/>
    <property type="chains" value="BF=1-179"/>
</dbReference>
<dbReference type="PDB" id="4V76">
    <property type="method" value="EM"/>
    <property type="resolution" value="17.00 A"/>
    <property type="chains" value="BF=1-179"/>
</dbReference>
<dbReference type="PDB" id="4V77">
    <property type="method" value="EM"/>
    <property type="resolution" value="17.00 A"/>
    <property type="chains" value="BF=1-179"/>
</dbReference>
<dbReference type="PDB" id="4V78">
    <property type="method" value="EM"/>
    <property type="resolution" value="20.00 A"/>
    <property type="chains" value="BF=1-179"/>
</dbReference>
<dbReference type="PDB" id="4V79">
    <property type="method" value="EM"/>
    <property type="resolution" value="15.00 A"/>
    <property type="chains" value="BF=1-179"/>
</dbReference>
<dbReference type="PDB" id="4V7A">
    <property type="method" value="EM"/>
    <property type="resolution" value="9.00 A"/>
    <property type="chains" value="BF=1-179"/>
</dbReference>
<dbReference type="PDB" id="4V7B">
    <property type="method" value="EM"/>
    <property type="resolution" value="6.80 A"/>
    <property type="chains" value="BF=1-179"/>
</dbReference>
<dbReference type="PDB" id="4V7C">
    <property type="method" value="EM"/>
    <property type="resolution" value="7.60 A"/>
    <property type="chains" value="BG=2-179"/>
</dbReference>
<dbReference type="PDB" id="4V7D">
    <property type="method" value="EM"/>
    <property type="resolution" value="7.60 A"/>
    <property type="chains" value="AG=2-179"/>
</dbReference>
<dbReference type="PDB" id="4V7I">
    <property type="method" value="EM"/>
    <property type="resolution" value="9.60 A"/>
    <property type="chains" value="AF=1-179"/>
</dbReference>
<dbReference type="PDB" id="4V7S">
    <property type="method" value="X-ray"/>
    <property type="resolution" value="3.25 A"/>
    <property type="chains" value="BF=2-178, DF=2-179"/>
</dbReference>
<dbReference type="PDB" id="4V7T">
    <property type="method" value="X-ray"/>
    <property type="resolution" value="3.19 A"/>
    <property type="chains" value="BF=2-178, DF=2-179"/>
</dbReference>
<dbReference type="PDB" id="4V7U">
    <property type="method" value="X-ray"/>
    <property type="resolution" value="3.10 A"/>
    <property type="chains" value="BF/DF=2-179"/>
</dbReference>
<dbReference type="PDB" id="4V7V">
    <property type="method" value="X-ray"/>
    <property type="resolution" value="3.29 A"/>
    <property type="chains" value="BF=2-178, DF=2-179"/>
</dbReference>
<dbReference type="PDB" id="4V85">
    <property type="method" value="X-ray"/>
    <property type="resolution" value="3.20 A"/>
    <property type="chains" value="BF=1-179"/>
</dbReference>
<dbReference type="PDB" id="4V89">
    <property type="method" value="X-ray"/>
    <property type="resolution" value="3.70 A"/>
    <property type="chains" value="BF=1-179"/>
</dbReference>
<dbReference type="PDB" id="4V9C">
    <property type="method" value="X-ray"/>
    <property type="resolution" value="3.30 A"/>
    <property type="chains" value="BF/DF=1-179"/>
</dbReference>
<dbReference type="PDB" id="4V9D">
    <property type="method" value="X-ray"/>
    <property type="resolution" value="3.00 A"/>
    <property type="chains" value="CF/DF=2-178"/>
</dbReference>
<dbReference type="PDB" id="4V9O">
    <property type="method" value="X-ray"/>
    <property type="resolution" value="2.90 A"/>
    <property type="chains" value="AF/CF/EF/GF=1-179"/>
</dbReference>
<dbReference type="PDB" id="4V9P">
    <property type="method" value="X-ray"/>
    <property type="resolution" value="2.90 A"/>
    <property type="chains" value="AF/CF/EF/GF=1-179"/>
</dbReference>
<dbReference type="PDB" id="4WF1">
    <property type="method" value="X-ray"/>
    <property type="resolution" value="3.09 A"/>
    <property type="chains" value="BF/DF=2-178"/>
</dbReference>
<dbReference type="PDB" id="4WOI">
    <property type="method" value="X-ray"/>
    <property type="resolution" value="3.00 A"/>
    <property type="chains" value="BF/CF=1-179"/>
</dbReference>
<dbReference type="PDB" id="4WWW">
    <property type="method" value="X-ray"/>
    <property type="resolution" value="3.10 A"/>
    <property type="chains" value="RF/YF=2-179"/>
</dbReference>
<dbReference type="PDB" id="4YBB">
    <property type="method" value="X-ray"/>
    <property type="resolution" value="2.10 A"/>
    <property type="chains" value="CF/DF=2-178"/>
</dbReference>
<dbReference type="PDB" id="5ADY">
    <property type="method" value="EM"/>
    <property type="resolution" value="4.50 A"/>
    <property type="chains" value="F=1-179"/>
</dbReference>
<dbReference type="PDB" id="5AFI">
    <property type="method" value="EM"/>
    <property type="resolution" value="2.90 A"/>
    <property type="chains" value="F=1-179"/>
</dbReference>
<dbReference type="PDB" id="5AKA">
    <property type="method" value="EM"/>
    <property type="resolution" value="5.70 A"/>
    <property type="chains" value="F=2-179"/>
</dbReference>
<dbReference type="PDB" id="5GAD">
    <property type="method" value="EM"/>
    <property type="resolution" value="3.70 A"/>
    <property type="chains" value="F=1-179"/>
</dbReference>
<dbReference type="PDB" id="5GAE">
    <property type="method" value="EM"/>
    <property type="resolution" value="3.33 A"/>
    <property type="chains" value="F=1-179"/>
</dbReference>
<dbReference type="PDB" id="5GAF">
    <property type="method" value="EM"/>
    <property type="resolution" value="4.30 A"/>
    <property type="chains" value="F=2-178"/>
</dbReference>
<dbReference type="PDB" id="5GAG">
    <property type="method" value="EM"/>
    <property type="resolution" value="3.80 A"/>
    <property type="chains" value="F=1-179"/>
</dbReference>
<dbReference type="PDB" id="5GAH">
    <property type="method" value="EM"/>
    <property type="resolution" value="3.80 A"/>
    <property type="chains" value="F=1-179"/>
</dbReference>
<dbReference type="PDB" id="5H5U">
    <property type="method" value="EM"/>
    <property type="resolution" value="3.00 A"/>
    <property type="chains" value="F=2-179"/>
</dbReference>
<dbReference type="PDB" id="5IQR">
    <property type="method" value="EM"/>
    <property type="resolution" value="3.00 A"/>
    <property type="chains" value="E=1-179"/>
</dbReference>
<dbReference type="PDB" id="5IT8">
    <property type="method" value="X-ray"/>
    <property type="resolution" value="3.12 A"/>
    <property type="chains" value="CF/DF=2-178"/>
</dbReference>
<dbReference type="PDB" id="5J5B">
    <property type="method" value="X-ray"/>
    <property type="resolution" value="2.80 A"/>
    <property type="chains" value="CF/DF=2-178"/>
</dbReference>
<dbReference type="PDB" id="5J7L">
    <property type="method" value="X-ray"/>
    <property type="resolution" value="3.00 A"/>
    <property type="chains" value="CF/DF=2-178"/>
</dbReference>
<dbReference type="PDB" id="5J88">
    <property type="method" value="X-ray"/>
    <property type="resolution" value="3.32 A"/>
    <property type="chains" value="CF/DF=2-179"/>
</dbReference>
<dbReference type="PDB" id="5J8A">
    <property type="method" value="X-ray"/>
    <property type="resolution" value="3.10 A"/>
    <property type="chains" value="CF/DF=2-179"/>
</dbReference>
<dbReference type="PDB" id="5J91">
    <property type="method" value="X-ray"/>
    <property type="resolution" value="2.96 A"/>
    <property type="chains" value="CF/DF=2-179"/>
</dbReference>
<dbReference type="PDB" id="5JC9">
    <property type="method" value="X-ray"/>
    <property type="resolution" value="3.03 A"/>
    <property type="chains" value="CF/DF=2-178"/>
</dbReference>
<dbReference type="PDB" id="5JTE">
    <property type="method" value="EM"/>
    <property type="resolution" value="3.60 A"/>
    <property type="chains" value="BF=1-179"/>
</dbReference>
<dbReference type="PDB" id="5JU8">
    <property type="method" value="EM"/>
    <property type="resolution" value="3.60 A"/>
    <property type="chains" value="BF=1-179"/>
</dbReference>
<dbReference type="PDB" id="5KCR">
    <property type="method" value="EM"/>
    <property type="resolution" value="3.60 A"/>
    <property type="chains" value="1G=1-179"/>
</dbReference>
<dbReference type="PDB" id="5KCS">
    <property type="method" value="EM"/>
    <property type="resolution" value="3.90 A"/>
    <property type="chains" value="1G=1-179"/>
</dbReference>
<dbReference type="PDB" id="5KPS">
    <property type="method" value="EM"/>
    <property type="resolution" value="3.90 A"/>
    <property type="chains" value="E=1-179"/>
</dbReference>
<dbReference type="PDB" id="5KPV">
    <property type="method" value="EM"/>
    <property type="resolution" value="4.10 A"/>
    <property type="chains" value="D=1-179"/>
</dbReference>
<dbReference type="PDB" id="5KPW">
    <property type="method" value="EM"/>
    <property type="resolution" value="3.90 A"/>
    <property type="chains" value="D=1-179"/>
</dbReference>
<dbReference type="PDB" id="5KPX">
    <property type="method" value="EM"/>
    <property type="resolution" value="3.90 A"/>
    <property type="chains" value="D=1-179"/>
</dbReference>
<dbReference type="PDB" id="5L3P">
    <property type="method" value="EM"/>
    <property type="resolution" value="3.70 A"/>
    <property type="chains" value="G=1-179"/>
</dbReference>
<dbReference type="PDB" id="5LZA">
    <property type="method" value="EM"/>
    <property type="resolution" value="3.60 A"/>
    <property type="chains" value="F=2-178"/>
</dbReference>
<dbReference type="PDB" id="5LZB">
    <property type="method" value="EM"/>
    <property type="resolution" value="5.30 A"/>
    <property type="chains" value="F=2-178"/>
</dbReference>
<dbReference type="PDB" id="5LZC">
    <property type="method" value="EM"/>
    <property type="resolution" value="4.80 A"/>
    <property type="chains" value="F=2-178"/>
</dbReference>
<dbReference type="PDB" id="5LZD">
    <property type="method" value="EM"/>
    <property type="resolution" value="3.40 A"/>
    <property type="chains" value="F=2-178"/>
</dbReference>
<dbReference type="PDB" id="5LZE">
    <property type="method" value="EM"/>
    <property type="resolution" value="3.50 A"/>
    <property type="chains" value="F=2-178"/>
</dbReference>
<dbReference type="PDB" id="5LZF">
    <property type="method" value="EM"/>
    <property type="resolution" value="4.60 A"/>
    <property type="chains" value="F=2-178"/>
</dbReference>
<dbReference type="PDB" id="5MDV">
    <property type="method" value="EM"/>
    <property type="resolution" value="2.97 A"/>
    <property type="chains" value="E=1-179"/>
</dbReference>
<dbReference type="PDB" id="5MDW">
    <property type="method" value="EM"/>
    <property type="resolution" value="3.06 A"/>
    <property type="chains" value="E=1-179"/>
</dbReference>
<dbReference type="PDB" id="5MDY">
    <property type="method" value="EM"/>
    <property type="resolution" value="3.35 A"/>
    <property type="chains" value="E=1-179"/>
</dbReference>
<dbReference type="PDB" id="5MDZ">
    <property type="method" value="EM"/>
    <property type="resolution" value="3.10 A"/>
    <property type="chains" value="E=1-179"/>
</dbReference>
<dbReference type="PDB" id="5MGP">
    <property type="method" value="EM"/>
    <property type="resolution" value="3.10 A"/>
    <property type="chains" value="F=2-178"/>
</dbReference>
<dbReference type="PDB" id="5NCO">
    <property type="method" value="EM"/>
    <property type="resolution" value="4.80 A"/>
    <property type="chains" value="F=2-178"/>
</dbReference>
<dbReference type="PDB" id="5NP6">
    <property type="method" value="EM"/>
    <property type="resolution" value="3.60 A"/>
    <property type="chains" value="d=2-178"/>
</dbReference>
<dbReference type="PDB" id="5NWY">
    <property type="method" value="EM"/>
    <property type="resolution" value="2.93 A"/>
    <property type="chains" value="S=1-179"/>
</dbReference>
<dbReference type="PDB" id="5O2R">
    <property type="method" value="EM"/>
    <property type="resolution" value="3.40 A"/>
    <property type="chains" value="F=2-178"/>
</dbReference>
<dbReference type="PDB" id="5U4I">
    <property type="method" value="EM"/>
    <property type="resolution" value="3.50 A"/>
    <property type="chains" value="F=1-179"/>
</dbReference>
<dbReference type="PDB" id="5U9F">
    <property type="method" value="EM"/>
    <property type="resolution" value="3.20 A"/>
    <property type="chains" value="07=1-179"/>
</dbReference>
<dbReference type="PDB" id="5U9G">
    <property type="method" value="EM"/>
    <property type="resolution" value="3.20 A"/>
    <property type="chains" value="07=1-179"/>
</dbReference>
<dbReference type="PDB" id="5UYK">
    <property type="method" value="EM"/>
    <property type="resolution" value="3.90 A"/>
    <property type="chains" value="07=2-178"/>
</dbReference>
<dbReference type="PDB" id="5UYL">
    <property type="method" value="EM"/>
    <property type="resolution" value="3.60 A"/>
    <property type="chains" value="07=2-178"/>
</dbReference>
<dbReference type="PDB" id="5UYM">
    <property type="method" value="EM"/>
    <property type="resolution" value="3.20 A"/>
    <property type="chains" value="07=2-178"/>
</dbReference>
<dbReference type="PDB" id="5UYN">
    <property type="method" value="EM"/>
    <property type="resolution" value="4.00 A"/>
    <property type="chains" value="07=2-178"/>
</dbReference>
<dbReference type="PDB" id="5UYP">
    <property type="method" value="EM"/>
    <property type="resolution" value="3.90 A"/>
    <property type="chains" value="07=2-178"/>
</dbReference>
<dbReference type="PDB" id="5UYQ">
    <property type="method" value="EM"/>
    <property type="resolution" value="3.80 A"/>
    <property type="chains" value="07=2-178"/>
</dbReference>
<dbReference type="PDB" id="5WDT">
    <property type="method" value="EM"/>
    <property type="resolution" value="3.00 A"/>
    <property type="chains" value="F=2-178"/>
</dbReference>
<dbReference type="PDB" id="5WE4">
    <property type="method" value="EM"/>
    <property type="resolution" value="3.10 A"/>
    <property type="chains" value="F=2-178"/>
</dbReference>
<dbReference type="PDB" id="5WE6">
    <property type="method" value="EM"/>
    <property type="resolution" value="3.40 A"/>
    <property type="chains" value="F=2-178"/>
</dbReference>
<dbReference type="PDB" id="5WF0">
    <property type="method" value="EM"/>
    <property type="resolution" value="3.60 A"/>
    <property type="chains" value="F=2-178"/>
</dbReference>
<dbReference type="PDB" id="5WFK">
    <property type="method" value="EM"/>
    <property type="resolution" value="3.40 A"/>
    <property type="chains" value="F=2-178"/>
</dbReference>
<dbReference type="PDB" id="5WFS">
    <property type="method" value="EM"/>
    <property type="resolution" value="3.00 A"/>
    <property type="chains" value="F=2-178"/>
</dbReference>
<dbReference type="PDB" id="6BU8">
    <property type="method" value="EM"/>
    <property type="resolution" value="3.50 A"/>
    <property type="chains" value="07=2-178"/>
</dbReference>
<dbReference type="PDB" id="6BY1">
    <property type="method" value="X-ray"/>
    <property type="resolution" value="3.94 A"/>
    <property type="chains" value="CF/DF=2-178"/>
</dbReference>
<dbReference type="PDB" id="6C4I">
    <property type="method" value="EM"/>
    <property type="resolution" value="3.24 A"/>
    <property type="chains" value="F=2-178"/>
</dbReference>
<dbReference type="PDB" id="6DNC">
    <property type="method" value="EM"/>
    <property type="resolution" value="3.70 A"/>
    <property type="chains" value="I=1-179"/>
</dbReference>
<dbReference type="PDB" id="6ENF">
    <property type="method" value="EM"/>
    <property type="resolution" value="3.20 A"/>
    <property type="chains" value="F=2-178"/>
</dbReference>
<dbReference type="PDB" id="6ENJ">
    <property type="method" value="EM"/>
    <property type="resolution" value="3.70 A"/>
    <property type="chains" value="F=2-178"/>
</dbReference>
<dbReference type="PDB" id="6ENU">
    <property type="method" value="EM"/>
    <property type="resolution" value="3.10 A"/>
    <property type="chains" value="F=2-178"/>
</dbReference>
<dbReference type="PDB" id="6GBZ">
    <property type="method" value="EM"/>
    <property type="resolution" value="3.80 A"/>
    <property type="chains" value="F=2-178"/>
</dbReference>
<dbReference type="PDB" id="6GC0">
    <property type="method" value="EM"/>
    <property type="resolution" value="3.80 A"/>
    <property type="chains" value="F=2-178"/>
</dbReference>
<dbReference type="PDB" id="6GC4">
    <property type="method" value="EM"/>
    <property type="resolution" value="4.30 A"/>
    <property type="chains" value="F=2-178"/>
</dbReference>
<dbReference type="PDB" id="6GC8">
    <property type="method" value="EM"/>
    <property type="resolution" value="3.80 A"/>
    <property type="chains" value="F=2-178"/>
</dbReference>
<dbReference type="PDB" id="6GWT">
    <property type="method" value="EM"/>
    <property type="resolution" value="3.80 A"/>
    <property type="chains" value="F=2-178"/>
</dbReference>
<dbReference type="PDB" id="6GXM">
    <property type="method" value="EM"/>
    <property type="resolution" value="3.80 A"/>
    <property type="chains" value="F=2-178"/>
</dbReference>
<dbReference type="PDB" id="6GXN">
    <property type="method" value="EM"/>
    <property type="resolution" value="3.90 A"/>
    <property type="chains" value="F=2-178"/>
</dbReference>
<dbReference type="PDB" id="6GXO">
    <property type="method" value="EM"/>
    <property type="resolution" value="3.90 A"/>
    <property type="chains" value="F=2-178"/>
</dbReference>
<dbReference type="PDB" id="6GXP">
    <property type="method" value="EM"/>
    <property type="resolution" value="4.40 A"/>
    <property type="chains" value="F=2-178"/>
</dbReference>
<dbReference type="PDB" id="6H4N">
    <property type="method" value="EM"/>
    <property type="resolution" value="3.00 A"/>
    <property type="chains" value="F=2-178"/>
</dbReference>
<dbReference type="PDB" id="6H58">
    <property type="method" value="EM"/>
    <property type="resolution" value="7.90 A"/>
    <property type="chains" value="F/FF=2-178"/>
</dbReference>
<dbReference type="PDB" id="6HRM">
    <property type="method" value="EM"/>
    <property type="resolution" value="2.96 A"/>
    <property type="chains" value="E=2-178"/>
</dbReference>
<dbReference type="PDB" id="6I0Y">
    <property type="method" value="EM"/>
    <property type="resolution" value="3.20 A"/>
    <property type="chains" value="F=2-178"/>
</dbReference>
<dbReference type="PDB" id="6I7V">
    <property type="method" value="X-ray"/>
    <property type="resolution" value="2.90 A"/>
    <property type="chains" value="CF/DF=2-178"/>
</dbReference>
<dbReference type="PDB" id="6O9J">
    <property type="method" value="EM"/>
    <property type="resolution" value="3.90 A"/>
    <property type="chains" value="F=2-179"/>
</dbReference>
<dbReference type="PDB" id="6O9K">
    <property type="method" value="EM"/>
    <property type="resolution" value="4.00 A"/>
    <property type="chains" value="F=2-178"/>
</dbReference>
<dbReference type="PDB" id="6OFX">
    <property type="method" value="EM"/>
    <property type="resolution" value="3.30 A"/>
    <property type="chains" value="e=2-178"/>
</dbReference>
<dbReference type="PDB" id="6OG7">
    <property type="method" value="EM"/>
    <property type="resolution" value="3.30 A"/>
    <property type="chains" value="e=2-178"/>
</dbReference>
<dbReference type="PDB" id="6OGF">
    <property type="method" value="EM"/>
    <property type="resolution" value="3.90 A"/>
    <property type="chains" value="e=1-179"/>
</dbReference>
<dbReference type="PDB" id="6OGG">
    <property type="method" value="EM"/>
    <property type="resolution" value="4.20 A"/>
    <property type="chains" value="e=1-179"/>
</dbReference>
<dbReference type="PDB" id="6OGI">
    <property type="method" value="EM"/>
    <property type="resolution" value="3.40 A"/>
    <property type="chains" value="e=1-179"/>
</dbReference>
<dbReference type="PDB" id="6OM6">
    <property type="method" value="EM"/>
    <property type="resolution" value="3.10 A"/>
    <property type="chains" value="E=1-179"/>
</dbReference>
<dbReference type="PDB" id="6ORE">
    <property type="method" value="EM"/>
    <property type="resolution" value="2.90 A"/>
    <property type="chains" value="E=2-178"/>
</dbReference>
<dbReference type="PDB" id="6ORL">
    <property type="method" value="EM"/>
    <property type="resolution" value="3.50 A"/>
    <property type="chains" value="E=2-178"/>
</dbReference>
<dbReference type="PDB" id="6OSK">
    <property type="method" value="EM"/>
    <property type="resolution" value="3.60 A"/>
    <property type="chains" value="E=2-178"/>
</dbReference>
<dbReference type="PDB" id="6OSQ">
    <property type="method" value="EM"/>
    <property type="resolution" value="3.50 A"/>
    <property type="chains" value="E=2-178"/>
</dbReference>
<dbReference type="PDB" id="6OST">
    <property type="method" value="EM"/>
    <property type="resolution" value="4.20 A"/>
    <property type="chains" value="E=2-178"/>
</dbReference>
<dbReference type="PDB" id="6OT3">
    <property type="method" value="EM"/>
    <property type="resolution" value="3.90 A"/>
    <property type="chains" value="E=2-178"/>
</dbReference>
<dbReference type="PDB" id="6OUO">
    <property type="method" value="EM"/>
    <property type="resolution" value="3.70 A"/>
    <property type="chains" value="E=2-178"/>
</dbReference>
<dbReference type="PDB" id="6PJ6">
    <property type="method" value="EM"/>
    <property type="resolution" value="2.20 A"/>
    <property type="chains" value="N=2-178"/>
</dbReference>
<dbReference type="PDB" id="6Q97">
    <property type="method" value="EM"/>
    <property type="resolution" value="3.90 A"/>
    <property type="chains" value="E=2-178"/>
</dbReference>
<dbReference type="PDB" id="6Q98">
    <property type="method" value="EM"/>
    <property type="resolution" value="4.30 A"/>
    <property type="chains" value="E=1-179"/>
</dbReference>
<dbReference type="PDB" id="6Q9A">
    <property type="method" value="EM"/>
    <property type="resolution" value="3.70 A"/>
    <property type="chains" value="E=2-178"/>
</dbReference>
<dbReference type="PDB" id="6QDW">
    <property type="method" value="EM"/>
    <property type="resolution" value="2.83 A"/>
    <property type="chains" value="f=1-179"/>
</dbReference>
<dbReference type="PDB" id="6QUL">
    <property type="method" value="EM"/>
    <property type="resolution" value="3.00 A"/>
    <property type="chains" value="F=1-179"/>
</dbReference>
<dbReference type="PDB" id="6S0K">
    <property type="method" value="EM"/>
    <property type="resolution" value="3.10 A"/>
    <property type="chains" value="F=1-179"/>
</dbReference>
<dbReference type="PDB" id="6SZS">
    <property type="method" value="EM"/>
    <property type="resolution" value="3.06 A"/>
    <property type="chains" value="F=1-179"/>
</dbReference>
<dbReference type="PDB" id="6TBV">
    <property type="method" value="EM"/>
    <property type="resolution" value="2.70 A"/>
    <property type="chains" value="L051=1-179"/>
</dbReference>
<dbReference type="PDB" id="6TC3">
    <property type="method" value="EM"/>
    <property type="resolution" value="2.70 A"/>
    <property type="chains" value="L051=1-179"/>
</dbReference>
<dbReference type="PDB" id="6U48">
    <property type="method" value="EM"/>
    <property type="resolution" value="2.87 A"/>
    <property type="chains" value="CF=2-178"/>
</dbReference>
<dbReference type="PDB" id="6VU3">
    <property type="method" value="EM"/>
    <property type="resolution" value="3.70 A"/>
    <property type="chains" value="n=2-178"/>
</dbReference>
<dbReference type="PDB" id="6VYQ">
    <property type="method" value="EM"/>
    <property type="resolution" value="3.70 A"/>
    <property type="chains" value="n=1-179"/>
</dbReference>
<dbReference type="PDB" id="6VYR">
    <property type="method" value="EM"/>
    <property type="resolution" value="3.80 A"/>
    <property type="chains" value="n=1-179"/>
</dbReference>
<dbReference type="PDB" id="6VYS">
    <property type="method" value="EM"/>
    <property type="resolution" value="3.70 A"/>
    <property type="chains" value="n=1-179"/>
</dbReference>
<dbReference type="PDB" id="6VYT">
    <property type="method" value="EM"/>
    <property type="resolution" value="14.00 A"/>
    <property type="chains" value="n=1-179"/>
</dbReference>
<dbReference type="PDB" id="6VYU">
    <property type="method" value="EM"/>
    <property type="resolution" value="7.00 A"/>
    <property type="chains" value="n=1-179"/>
</dbReference>
<dbReference type="PDB" id="6VYW">
    <property type="method" value="EM"/>
    <property type="resolution" value="7.00 A"/>
    <property type="chains" value="n=1-179"/>
</dbReference>
<dbReference type="PDB" id="6VYX">
    <property type="method" value="EM"/>
    <property type="resolution" value="9.90 A"/>
    <property type="chains" value="n=1-179"/>
</dbReference>
<dbReference type="PDB" id="6VYY">
    <property type="method" value="EM"/>
    <property type="resolution" value="9.90 A"/>
    <property type="chains" value="n=1-179"/>
</dbReference>
<dbReference type="PDB" id="6VYZ">
    <property type="method" value="EM"/>
    <property type="resolution" value="9.90 A"/>
    <property type="chains" value="n=1-179"/>
</dbReference>
<dbReference type="PDB" id="6VZ2">
    <property type="method" value="EM"/>
    <property type="resolution" value="10.00 A"/>
    <property type="chains" value="n=2-178"/>
</dbReference>
<dbReference type="PDB" id="6VZ3">
    <property type="method" value="EM"/>
    <property type="resolution" value="8.90 A"/>
    <property type="chains" value="n=2-178"/>
</dbReference>
<dbReference type="PDB" id="6VZ5">
    <property type="method" value="EM"/>
    <property type="resolution" value="8.90 A"/>
    <property type="chains" value="n=1-179"/>
</dbReference>
<dbReference type="PDB" id="6VZ7">
    <property type="method" value="EM"/>
    <property type="resolution" value="7.00 A"/>
    <property type="chains" value="n=2-178"/>
</dbReference>
<dbReference type="PDB" id="6VZJ">
    <property type="method" value="EM"/>
    <property type="resolution" value="4.10 A"/>
    <property type="chains" value="n=2-178"/>
</dbReference>
<dbReference type="PDB" id="6WD0">
    <property type="method" value="EM"/>
    <property type="resolution" value="3.00 A"/>
    <property type="chains" value="e=2-178"/>
</dbReference>
<dbReference type="PDB" id="6WD1">
    <property type="method" value="EM"/>
    <property type="resolution" value="3.30 A"/>
    <property type="chains" value="e=2-178"/>
</dbReference>
<dbReference type="PDB" id="6WD2">
    <property type="method" value="EM"/>
    <property type="resolution" value="3.60 A"/>
    <property type="chains" value="e=2-178"/>
</dbReference>
<dbReference type="PDB" id="6WD3">
    <property type="method" value="EM"/>
    <property type="resolution" value="3.60 A"/>
    <property type="chains" value="e=2-178"/>
</dbReference>
<dbReference type="PDB" id="6WD4">
    <property type="method" value="EM"/>
    <property type="resolution" value="3.70 A"/>
    <property type="chains" value="e=2-178"/>
</dbReference>
<dbReference type="PDB" id="6WD5">
    <property type="method" value="EM"/>
    <property type="resolution" value="3.60 A"/>
    <property type="chains" value="e=2-178"/>
</dbReference>
<dbReference type="PDB" id="6WD6">
    <property type="method" value="EM"/>
    <property type="resolution" value="3.70 A"/>
    <property type="chains" value="e=2-178"/>
</dbReference>
<dbReference type="PDB" id="6WD7">
    <property type="method" value="EM"/>
    <property type="resolution" value="3.90 A"/>
    <property type="chains" value="e=2-178"/>
</dbReference>
<dbReference type="PDB" id="6WD8">
    <property type="method" value="EM"/>
    <property type="resolution" value="3.70 A"/>
    <property type="chains" value="e=2-178"/>
</dbReference>
<dbReference type="PDB" id="6WD9">
    <property type="method" value="EM"/>
    <property type="resolution" value="3.70 A"/>
    <property type="chains" value="e=2-178"/>
</dbReference>
<dbReference type="PDB" id="6WDA">
    <property type="method" value="EM"/>
    <property type="resolution" value="3.80 A"/>
    <property type="chains" value="e=2-178"/>
</dbReference>
<dbReference type="PDB" id="6WDB">
    <property type="method" value="EM"/>
    <property type="resolution" value="4.00 A"/>
    <property type="chains" value="e=2-178"/>
</dbReference>
<dbReference type="PDB" id="6WDC">
    <property type="method" value="EM"/>
    <property type="resolution" value="4.20 A"/>
    <property type="chains" value="e=2-178"/>
</dbReference>
<dbReference type="PDB" id="6WDD">
    <property type="method" value="EM"/>
    <property type="resolution" value="3.20 A"/>
    <property type="chains" value="e=2-178"/>
</dbReference>
<dbReference type="PDB" id="6WDE">
    <property type="method" value="EM"/>
    <property type="resolution" value="3.00 A"/>
    <property type="chains" value="e=2-178"/>
</dbReference>
<dbReference type="PDB" id="6WDF">
    <property type="method" value="EM"/>
    <property type="resolution" value="3.30 A"/>
    <property type="chains" value="e=2-178"/>
</dbReference>
<dbReference type="PDB" id="6WDG">
    <property type="method" value="EM"/>
    <property type="resolution" value="3.30 A"/>
    <property type="chains" value="e=2-178"/>
</dbReference>
<dbReference type="PDB" id="6WDH">
    <property type="method" value="EM"/>
    <property type="resolution" value="4.30 A"/>
    <property type="chains" value="e=2-178"/>
</dbReference>
<dbReference type="PDB" id="6WDI">
    <property type="method" value="EM"/>
    <property type="resolution" value="4.00 A"/>
    <property type="chains" value="e=2-178"/>
</dbReference>
<dbReference type="PDB" id="6WDJ">
    <property type="method" value="EM"/>
    <property type="resolution" value="3.70 A"/>
    <property type="chains" value="e=2-178"/>
</dbReference>
<dbReference type="PDB" id="6WDK">
    <property type="method" value="EM"/>
    <property type="resolution" value="3.60 A"/>
    <property type="chains" value="e=2-178"/>
</dbReference>
<dbReference type="PDB" id="6WDL">
    <property type="method" value="EM"/>
    <property type="resolution" value="3.70 A"/>
    <property type="chains" value="e=2-178"/>
</dbReference>
<dbReference type="PDB" id="6WDM">
    <property type="method" value="EM"/>
    <property type="resolution" value="3.60 A"/>
    <property type="chains" value="e=2-178"/>
</dbReference>
<dbReference type="PDB" id="6WNT">
    <property type="method" value="EM"/>
    <property type="resolution" value="3.10 A"/>
    <property type="chains" value="e=2-178"/>
</dbReference>
<dbReference type="PDB" id="6WNV">
    <property type="method" value="EM"/>
    <property type="resolution" value="3.50 A"/>
    <property type="chains" value="e=2-178"/>
</dbReference>
<dbReference type="PDB" id="6WNW">
    <property type="method" value="EM"/>
    <property type="resolution" value="3.20 A"/>
    <property type="chains" value="e=2-178"/>
</dbReference>
<dbReference type="PDB" id="6X6T">
    <property type="method" value="EM"/>
    <property type="resolution" value="3.20 A"/>
    <property type="chains" value="n=1-179"/>
</dbReference>
<dbReference type="PDB" id="6X7F">
    <property type="method" value="EM"/>
    <property type="resolution" value="3.50 A"/>
    <property type="chains" value="n=1-179"/>
</dbReference>
<dbReference type="PDB" id="6X7K">
    <property type="method" value="EM"/>
    <property type="resolution" value="3.10 A"/>
    <property type="chains" value="n=1-179"/>
</dbReference>
<dbReference type="PDB" id="6X9Q">
    <property type="method" value="EM"/>
    <property type="resolution" value="4.80 A"/>
    <property type="chains" value="n=1-179"/>
</dbReference>
<dbReference type="PDB" id="6XDQ">
    <property type="method" value="EM"/>
    <property type="resolution" value="3.70 A"/>
    <property type="chains" value="n=1-179"/>
</dbReference>
<dbReference type="PDB" id="6XDR">
    <property type="method" value="EM"/>
    <property type="resolution" value="4.70 A"/>
    <property type="chains" value="n=1-179"/>
</dbReference>
<dbReference type="PDB" id="6XGF">
    <property type="method" value="EM"/>
    <property type="resolution" value="5.00 A"/>
    <property type="chains" value="n=1-179"/>
</dbReference>
<dbReference type="PDB" id="6XII">
    <property type="method" value="EM"/>
    <property type="resolution" value="7.00 A"/>
    <property type="chains" value="n=1-179"/>
</dbReference>
<dbReference type="PDB" id="6XIJ">
    <property type="method" value="EM"/>
    <property type="resolution" value="8.00 A"/>
    <property type="chains" value="n=1-179"/>
</dbReference>
<dbReference type="PDB" id="6XZ7">
    <property type="method" value="EM"/>
    <property type="resolution" value="2.10 A"/>
    <property type="chains" value="F=2-178"/>
</dbReference>
<dbReference type="PDB" id="6XZA">
    <property type="method" value="EM"/>
    <property type="resolution" value="2.66 A"/>
    <property type="chains" value="F2=2-178"/>
</dbReference>
<dbReference type="PDB" id="6XZB">
    <property type="method" value="EM"/>
    <property type="resolution" value="2.54 A"/>
    <property type="chains" value="F2=2-178"/>
</dbReference>
<dbReference type="PDB" id="6Y69">
    <property type="method" value="EM"/>
    <property type="resolution" value="2.86 A"/>
    <property type="chains" value="F=2-178"/>
</dbReference>
<dbReference type="PDB" id="6YS3">
    <property type="method" value="EM"/>
    <property type="resolution" value="2.58 A"/>
    <property type="chains" value="f=1-179"/>
</dbReference>
<dbReference type="PDB" id="6YSR">
    <property type="method" value="EM"/>
    <property type="resolution" value="3.10 A"/>
    <property type="chains" value="F=1-179"/>
</dbReference>
<dbReference type="PDB" id="6YSS">
    <property type="method" value="EM"/>
    <property type="resolution" value="2.60 A"/>
    <property type="chains" value="F=1-179"/>
</dbReference>
<dbReference type="PDB" id="6YST">
    <property type="method" value="EM"/>
    <property type="resolution" value="3.20 A"/>
    <property type="chains" value="F=1-179"/>
</dbReference>
<dbReference type="PDB" id="6YSU">
    <property type="method" value="EM"/>
    <property type="resolution" value="3.70 A"/>
    <property type="chains" value="F=1-179"/>
</dbReference>
<dbReference type="PDB" id="6ZTJ">
    <property type="method" value="EM"/>
    <property type="resolution" value="3.40 A"/>
    <property type="chains" value="BF=1-179"/>
</dbReference>
<dbReference type="PDB" id="6ZTL">
    <property type="method" value="EM"/>
    <property type="resolution" value="3.50 A"/>
    <property type="chains" value="BF=1-179"/>
</dbReference>
<dbReference type="PDB" id="6ZTM">
    <property type="method" value="EM"/>
    <property type="resolution" value="3.30 A"/>
    <property type="chains" value="BF=1-179"/>
</dbReference>
<dbReference type="PDB" id="6ZTN">
    <property type="method" value="EM"/>
    <property type="resolution" value="3.90 A"/>
    <property type="chains" value="BF=1-179"/>
</dbReference>
<dbReference type="PDB" id="6ZTO">
    <property type="method" value="EM"/>
    <property type="resolution" value="3.00 A"/>
    <property type="chains" value="BF=1-179"/>
</dbReference>
<dbReference type="PDB" id="6ZTP">
    <property type="method" value="EM"/>
    <property type="resolution" value="3.00 A"/>
    <property type="chains" value="BF=1-179"/>
</dbReference>
<dbReference type="PDB" id="6ZU1">
    <property type="method" value="EM"/>
    <property type="resolution" value="3.00 A"/>
    <property type="chains" value="BF=1-179"/>
</dbReference>
<dbReference type="PDB" id="7ABZ">
    <property type="method" value="EM"/>
    <property type="resolution" value="3.21 A"/>
    <property type="chains" value="E=2-178"/>
</dbReference>
<dbReference type="PDB" id="7AC7">
    <property type="method" value="EM"/>
    <property type="resolution" value="3.08 A"/>
    <property type="chains" value="E=2-178"/>
</dbReference>
<dbReference type="PDB" id="7ACJ">
    <property type="method" value="EM"/>
    <property type="resolution" value="3.20 A"/>
    <property type="chains" value="E=2-178"/>
</dbReference>
<dbReference type="PDB" id="7ACR">
    <property type="method" value="EM"/>
    <property type="resolution" value="3.44 A"/>
    <property type="chains" value="E=2-178"/>
</dbReference>
<dbReference type="PDB" id="7B5K">
    <property type="method" value="EM"/>
    <property type="resolution" value="2.90 A"/>
    <property type="chains" value="F=2-178"/>
</dbReference>
<dbReference type="PDB" id="7BL2">
    <property type="method" value="EM"/>
    <property type="resolution" value="3.70 A"/>
    <property type="chains" value="F=1-179"/>
</dbReference>
<dbReference type="PDB" id="7BL3">
    <property type="method" value="EM"/>
    <property type="resolution" value="3.50 A"/>
    <property type="chains" value="F=1-179"/>
</dbReference>
<dbReference type="PDB" id="7BL4">
    <property type="method" value="EM"/>
    <property type="resolution" value="2.40 A"/>
    <property type="chains" value="F=1-179"/>
</dbReference>
<dbReference type="PDB" id="7BL5">
    <property type="method" value="EM"/>
    <property type="resolution" value="3.30 A"/>
    <property type="chains" value="F=1-179"/>
</dbReference>
<dbReference type="PDB" id="7BL6">
    <property type="method" value="EM"/>
    <property type="resolution" value="4.00 A"/>
    <property type="chains" value="F=1-179"/>
</dbReference>
<dbReference type="PDB" id="7BV8">
    <property type="method" value="EM"/>
    <property type="resolution" value="3.14 A"/>
    <property type="chains" value="F=1-179"/>
</dbReference>
<dbReference type="PDB" id="7D6Z">
    <property type="method" value="EM"/>
    <property type="resolution" value="3.40 A"/>
    <property type="chains" value="F=1-179"/>
</dbReference>
<dbReference type="PDB" id="7D80">
    <property type="method" value="EM"/>
    <property type="resolution" value="4.10 A"/>
    <property type="chains" value="e=1-179"/>
</dbReference>
<dbReference type="PDB" id="7JSS">
    <property type="method" value="EM"/>
    <property type="resolution" value="3.70 A"/>
    <property type="chains" value="e=2-178"/>
</dbReference>
<dbReference type="PDB" id="7JSW">
    <property type="method" value="EM"/>
    <property type="resolution" value="3.80 A"/>
    <property type="chains" value="e=2-178"/>
</dbReference>
<dbReference type="PDB" id="7JSZ">
    <property type="method" value="EM"/>
    <property type="resolution" value="3.70 A"/>
    <property type="chains" value="e=2-178"/>
</dbReference>
<dbReference type="PDB" id="7JT1">
    <property type="method" value="EM"/>
    <property type="resolution" value="3.30 A"/>
    <property type="chains" value="e=2-178"/>
</dbReference>
<dbReference type="PDB" id="7JT2">
    <property type="method" value="EM"/>
    <property type="resolution" value="3.50 A"/>
    <property type="chains" value="e=2-178"/>
</dbReference>
<dbReference type="PDB" id="7JT3">
    <property type="method" value="EM"/>
    <property type="resolution" value="3.70 A"/>
    <property type="chains" value="e=2-178"/>
</dbReference>
<dbReference type="PDB" id="7K00">
    <property type="method" value="EM"/>
    <property type="resolution" value="1.98 A"/>
    <property type="chains" value="f=1-179"/>
</dbReference>
<dbReference type="PDB" id="7K50">
    <property type="method" value="EM"/>
    <property type="resolution" value="3.40 A"/>
    <property type="chains" value="e=2-178"/>
</dbReference>
<dbReference type="PDB" id="7K51">
    <property type="method" value="EM"/>
    <property type="resolution" value="3.50 A"/>
    <property type="chains" value="e=2-178"/>
</dbReference>
<dbReference type="PDB" id="7K52">
    <property type="method" value="EM"/>
    <property type="resolution" value="3.40 A"/>
    <property type="chains" value="e=2-178"/>
</dbReference>
<dbReference type="PDB" id="7K53">
    <property type="method" value="EM"/>
    <property type="resolution" value="3.20 A"/>
    <property type="chains" value="e=2-178"/>
</dbReference>
<dbReference type="PDB" id="7K54">
    <property type="method" value="EM"/>
    <property type="resolution" value="3.20 A"/>
    <property type="chains" value="e=2-178"/>
</dbReference>
<dbReference type="PDB" id="7K55">
    <property type="method" value="EM"/>
    <property type="resolution" value="3.30 A"/>
    <property type="chains" value="e=2-178"/>
</dbReference>
<dbReference type="PDB" id="7LV0">
    <property type="method" value="EM"/>
    <property type="resolution" value="3.20 A"/>
    <property type="chains" value="e=2-178"/>
</dbReference>
<dbReference type="PDB" id="7LVK">
    <property type="method" value="EM"/>
    <property type="resolution" value="2.20 A"/>
    <property type="chains" value="N=1-179"/>
</dbReference>
<dbReference type="PDB" id="7M5D">
    <property type="method" value="EM"/>
    <property type="resolution" value="2.80 A"/>
    <property type="chains" value="E=2-178"/>
</dbReference>
<dbReference type="PDB" id="7N1P">
    <property type="method" value="EM"/>
    <property type="resolution" value="2.33 A"/>
    <property type="chains" value="LE=1-179"/>
</dbReference>
<dbReference type="PDB" id="7N2C">
    <property type="method" value="EM"/>
    <property type="resolution" value="2.72 A"/>
    <property type="chains" value="LE=1-179"/>
</dbReference>
<dbReference type="PDB" id="7N2U">
    <property type="method" value="EM"/>
    <property type="resolution" value="2.53 A"/>
    <property type="chains" value="LE=1-179"/>
</dbReference>
<dbReference type="PDB" id="7N2V">
    <property type="method" value="EM"/>
    <property type="resolution" value="2.54 A"/>
    <property type="chains" value="LE=1-179"/>
</dbReference>
<dbReference type="PDB" id="7N30">
    <property type="method" value="EM"/>
    <property type="resolution" value="2.66 A"/>
    <property type="chains" value="LE=1-179"/>
</dbReference>
<dbReference type="PDB" id="7N31">
    <property type="method" value="EM"/>
    <property type="resolution" value="2.69 A"/>
    <property type="chains" value="LE=1-179"/>
</dbReference>
<dbReference type="PDB" id="7NBU">
    <property type="method" value="EM"/>
    <property type="resolution" value="3.11 A"/>
    <property type="chains" value="f=2-178"/>
</dbReference>
<dbReference type="PDB" id="7NWT">
    <property type="method" value="EM"/>
    <property type="resolution" value="2.66 A"/>
    <property type="chains" value="E=1-179"/>
</dbReference>
<dbReference type="PDB" id="7O19">
    <property type="method" value="EM"/>
    <property type="resolution" value="2.90 A"/>
    <property type="chains" value="BF=1-179"/>
</dbReference>
<dbReference type="PDB" id="7O1A">
    <property type="method" value="EM"/>
    <property type="resolution" value="2.40 A"/>
    <property type="chains" value="BF=1-179"/>
</dbReference>
<dbReference type="PDB" id="7O1C">
    <property type="method" value="EM"/>
    <property type="resolution" value="2.60 A"/>
    <property type="chains" value="BF=1-179"/>
</dbReference>
<dbReference type="PDB" id="7OIZ">
    <property type="method" value="EM"/>
    <property type="resolution" value="2.90 A"/>
    <property type="chains" value="f=1-179"/>
</dbReference>
<dbReference type="PDB" id="7OJ0">
    <property type="method" value="EM"/>
    <property type="resolution" value="3.50 A"/>
    <property type="chains" value="f=1-179"/>
</dbReference>
<dbReference type="PDB" id="7P3K">
    <property type="method" value="EM"/>
    <property type="resolution" value="2.90 A"/>
    <property type="chains" value="f=1-179"/>
</dbReference>
<dbReference type="PDB" id="7PJS">
    <property type="method" value="EM"/>
    <property type="resolution" value="2.35 A"/>
    <property type="chains" value="F=1-179"/>
</dbReference>
<dbReference type="PDB" id="7PJT">
    <property type="method" value="EM"/>
    <property type="resolution" value="6.00 A"/>
    <property type="chains" value="F=1-179"/>
</dbReference>
<dbReference type="PDB" id="7PJU">
    <property type="method" value="EM"/>
    <property type="resolution" value="9.50 A"/>
    <property type="chains" value="F=1-179"/>
</dbReference>
<dbReference type="PDB" id="7PJV">
    <property type="method" value="EM"/>
    <property type="resolution" value="3.10 A"/>
    <property type="chains" value="F=1-179"/>
</dbReference>
<dbReference type="PDB" id="7PJW">
    <property type="method" value="EM"/>
    <property type="resolution" value="4.00 A"/>
    <property type="chains" value="F=1-179"/>
</dbReference>
<dbReference type="PDB" id="7PJX">
    <property type="method" value="EM"/>
    <property type="resolution" value="6.50 A"/>
    <property type="chains" value="F=1-179"/>
</dbReference>
<dbReference type="PDB" id="7PJY">
    <property type="method" value="EM"/>
    <property type="resolution" value="3.10 A"/>
    <property type="chains" value="F=1-179"/>
</dbReference>
<dbReference type="PDB" id="7PJZ">
    <property type="method" value="EM"/>
    <property type="resolution" value="6.00 A"/>
    <property type="chains" value="F=1-179"/>
</dbReference>
<dbReference type="PDB" id="7Q4K">
    <property type="method" value="EM"/>
    <property type="resolution" value="3.00 A"/>
    <property type="chains" value="BF=1-179"/>
</dbReference>
<dbReference type="PDB" id="7QG8">
    <property type="method" value="EM"/>
    <property type="resolution" value="3.97 A"/>
    <property type="chains" value="S=1-179"/>
</dbReference>
<dbReference type="PDB" id="7QGH">
    <property type="method" value="EM"/>
    <property type="resolution" value="4.48 A"/>
    <property type="chains" value="S=1-179"/>
</dbReference>
<dbReference type="PDB" id="7QGN">
    <property type="method" value="EM"/>
    <property type="resolution" value="3.37 A"/>
    <property type="chains" value="S=1-179"/>
</dbReference>
<dbReference type="PDB" id="7QGR">
    <property type="method" value="EM"/>
    <property type="resolution" value="5.70 A"/>
    <property type="chains" value="S=1-179"/>
</dbReference>
<dbReference type="PDB" id="7S1G">
    <property type="method" value="EM"/>
    <property type="resolution" value="2.48 A"/>
    <property type="chains" value="N=1-179"/>
</dbReference>
<dbReference type="PDB" id="7S1H">
    <property type="method" value="EM"/>
    <property type="resolution" value="2.35 A"/>
    <property type="chains" value="N=1-179"/>
</dbReference>
<dbReference type="PDB" id="7S1I">
    <property type="method" value="EM"/>
    <property type="resolution" value="2.48 A"/>
    <property type="chains" value="N=1-179"/>
</dbReference>
<dbReference type="PDB" id="7S1J">
    <property type="method" value="EM"/>
    <property type="resolution" value="2.47 A"/>
    <property type="chains" value="N=1-179"/>
</dbReference>
<dbReference type="PDB" id="7S1K">
    <property type="method" value="EM"/>
    <property type="resolution" value="2.42 A"/>
    <property type="chains" value="N=1-179"/>
</dbReference>
<dbReference type="PDB" id="7SA4">
    <property type="method" value="EM"/>
    <property type="resolution" value="2.55 A"/>
    <property type="chains" value="E=1-179"/>
</dbReference>
<dbReference type="PDB" id="7SS9">
    <property type="method" value="EM"/>
    <property type="resolution" value="3.90 A"/>
    <property type="chains" value="e=2-178"/>
</dbReference>
<dbReference type="PDB" id="7SSD">
    <property type="method" value="EM"/>
    <property type="resolution" value="3.30 A"/>
    <property type="chains" value="e=2-178"/>
</dbReference>
<dbReference type="PDB" id="7SSL">
    <property type="method" value="EM"/>
    <property type="resolution" value="3.80 A"/>
    <property type="chains" value="e=2-178"/>
</dbReference>
<dbReference type="PDB" id="7SSN">
    <property type="method" value="EM"/>
    <property type="resolution" value="3.20 A"/>
    <property type="chains" value="e=2-178"/>
</dbReference>
<dbReference type="PDB" id="7SSO">
    <property type="method" value="EM"/>
    <property type="resolution" value="3.20 A"/>
    <property type="chains" value="e=2-178"/>
</dbReference>
<dbReference type="PDB" id="7SSW">
    <property type="method" value="EM"/>
    <property type="resolution" value="3.80 A"/>
    <property type="chains" value="e=2-178"/>
</dbReference>
<dbReference type="PDB" id="7ST2">
    <property type="method" value="EM"/>
    <property type="resolution" value="2.90 A"/>
    <property type="chains" value="e=2-178"/>
</dbReference>
<dbReference type="PDB" id="7ST6">
    <property type="method" value="EM"/>
    <property type="resolution" value="3.00 A"/>
    <property type="chains" value="e=2-178"/>
</dbReference>
<dbReference type="PDB" id="7ST7">
    <property type="method" value="EM"/>
    <property type="resolution" value="3.20 A"/>
    <property type="chains" value="e=2-178"/>
</dbReference>
<dbReference type="PDB" id="7TOS">
    <property type="method" value="EM"/>
    <property type="resolution" value="2.90 A"/>
    <property type="chains" value="L05=2-178"/>
</dbReference>
<dbReference type="PDB" id="7UG7">
    <property type="method" value="EM"/>
    <property type="resolution" value="2.58 A"/>
    <property type="chains" value="LE=1-179"/>
</dbReference>
<dbReference type="PDB" id="7UPH">
    <property type="method" value="EM"/>
    <property type="resolution" value="4.18 A"/>
    <property type="chains" value="N=2-178"/>
</dbReference>
<dbReference type="PDB" id="7Y7C">
    <property type="method" value="EM"/>
    <property type="resolution" value="2.51 A"/>
    <property type="chains" value="f=1-179"/>
</dbReference>
<dbReference type="PDB" id="7Y7D">
    <property type="method" value="EM"/>
    <property type="resolution" value="2.58 A"/>
    <property type="chains" value="f=1-179"/>
</dbReference>
<dbReference type="PDB" id="7Y7E">
    <property type="method" value="EM"/>
    <property type="resolution" value="2.41 A"/>
    <property type="chains" value="f=1-179"/>
</dbReference>
<dbReference type="PDB" id="7Y7F">
    <property type="method" value="EM"/>
    <property type="resolution" value="2.43 A"/>
    <property type="chains" value="f=1-179"/>
</dbReference>
<dbReference type="PDB" id="7Y7G">
    <property type="method" value="EM"/>
    <property type="resolution" value="2.34 A"/>
    <property type="chains" value="f=1-179"/>
</dbReference>
<dbReference type="PDB" id="7Y7H">
    <property type="method" value="EM"/>
    <property type="resolution" value="2.51 A"/>
    <property type="chains" value="f=1-179"/>
</dbReference>
<dbReference type="PDB" id="7YLA">
    <property type="method" value="EM"/>
    <property type="resolution" value="2.52 A"/>
    <property type="chains" value="N=2-178"/>
</dbReference>
<dbReference type="PDB" id="7Z20">
    <property type="method" value="EM"/>
    <property type="resolution" value="2.29 A"/>
    <property type="chains" value="f=1-179"/>
</dbReference>
<dbReference type="PDB" id="7ZOD">
    <property type="method" value="EM"/>
    <property type="resolution" value="2.56 A"/>
    <property type="chains" value="f=1-179"/>
</dbReference>
<dbReference type="PDB" id="7ZP8">
    <property type="method" value="EM"/>
    <property type="resolution" value="2.20 A"/>
    <property type="chains" value="f=1-179"/>
</dbReference>
<dbReference type="PDB" id="7ZQ5">
    <property type="method" value="EM"/>
    <property type="resolution" value="2.70 A"/>
    <property type="chains" value="f=1-179"/>
</dbReference>
<dbReference type="PDB" id="7ZQ6">
    <property type="method" value="EM"/>
    <property type="resolution" value="2.75 A"/>
    <property type="chains" value="f=1-179"/>
</dbReference>
<dbReference type="PDB" id="7ZTA">
    <property type="method" value="EM"/>
    <property type="resolution" value="2.70 A"/>
    <property type="chains" value="L051=2-178"/>
</dbReference>
<dbReference type="PDB" id="8A3L">
    <property type="method" value="EM"/>
    <property type="resolution" value="3.42 A"/>
    <property type="chains" value="f=1-179"/>
</dbReference>
<dbReference type="PDB" id="8AKN">
    <property type="method" value="EM"/>
    <property type="resolution" value="2.30 A"/>
    <property type="chains" value="f=1-179"/>
</dbReference>
<dbReference type="PDB" id="8AM9">
    <property type="method" value="EM"/>
    <property type="resolution" value="2.80 A"/>
    <property type="chains" value="f=1-179"/>
</dbReference>
<dbReference type="PDB" id="8ANA">
    <property type="method" value="EM"/>
    <property type="resolution" value="2.10 A"/>
    <property type="chains" value="f=1-179"/>
</dbReference>
<dbReference type="PDB" id="8AP4">
    <property type="method" value="EM"/>
    <property type="resolution" value="3.00 A"/>
    <property type="chains" value="f=1-179"/>
</dbReference>
<dbReference type="PDB" id="8AYE">
    <property type="method" value="EM"/>
    <property type="resolution" value="1.96 A"/>
    <property type="chains" value="f=1-179"/>
</dbReference>
<dbReference type="PDB" id="8B0X">
    <property type="method" value="EM"/>
    <property type="resolution" value="1.55 A"/>
    <property type="chains" value="f=1-179"/>
</dbReference>
<dbReference type="PDB" id="8BF7">
    <property type="method" value="EM"/>
    <property type="resolution" value="2.33 A"/>
    <property type="chains" value="D=1-179"/>
</dbReference>
<dbReference type="PDB" id="8BGE">
    <property type="method" value="EM"/>
    <property type="resolution" value="2.11 A"/>
    <property type="chains" value="D=1-179"/>
</dbReference>
<dbReference type="PDB" id="8BGH">
    <property type="method" value="EM"/>
    <property type="resolution" value="2.88 A"/>
    <property type="chains" value="D=1-179"/>
</dbReference>
<dbReference type="PDB" id="8BH4">
    <property type="method" value="EM"/>
    <property type="resolution" value="2.62 A"/>
    <property type="chains" value="D=1-179"/>
</dbReference>
<dbReference type="PDB" id="8BHJ">
    <property type="method" value="EM"/>
    <property type="resolution" value="2.81 A"/>
    <property type="chains" value="D=1-179"/>
</dbReference>
<dbReference type="PDB" id="8BHL">
    <property type="method" value="EM"/>
    <property type="resolution" value="2.21 A"/>
    <property type="chains" value="D=1-179"/>
</dbReference>
<dbReference type="PDB" id="8BHN">
    <property type="method" value="EM"/>
    <property type="resolution" value="2.85 A"/>
    <property type="chains" value="D=1-179"/>
</dbReference>
<dbReference type="PDB" id="8BHP">
    <property type="method" value="EM"/>
    <property type="resolution" value="2.37 A"/>
    <property type="chains" value="D=1-179"/>
</dbReference>
<dbReference type="PDB" id="8BIL">
    <property type="method" value="EM"/>
    <property type="resolution" value="2.04 A"/>
    <property type="chains" value="D=1-179"/>
</dbReference>
<dbReference type="PDB" id="8BIM">
    <property type="method" value="EM"/>
    <property type="resolution" value="2.04 A"/>
    <property type="chains" value="D=1-179"/>
</dbReference>
<dbReference type="PDB" id="8C8X">
    <property type="method" value="EM"/>
    <property type="resolution" value="3.93 A"/>
    <property type="chains" value="F=1-179"/>
</dbReference>
<dbReference type="PDB" id="8C8Y">
    <property type="method" value="EM"/>
    <property type="resolution" value="3.03 A"/>
    <property type="chains" value="F=1-179"/>
</dbReference>
<dbReference type="PDB" id="8C8Z">
    <property type="method" value="EM"/>
    <property type="resolution" value="3.12 A"/>
    <property type="chains" value="F=1-179"/>
</dbReference>
<dbReference type="PDB" id="8C90">
    <property type="method" value="EM"/>
    <property type="resolution" value="3.15 A"/>
    <property type="chains" value="F=1-179"/>
</dbReference>
<dbReference type="PDB" id="8C94">
    <property type="method" value="EM"/>
    <property type="resolution" value="3.80 A"/>
    <property type="chains" value="F=1-179"/>
</dbReference>
<dbReference type="PDB" id="8C95">
    <property type="method" value="EM"/>
    <property type="resolution" value="4.92 A"/>
    <property type="chains" value="F=1-179"/>
</dbReference>
<dbReference type="PDB" id="8CEU">
    <property type="method" value="EM"/>
    <property type="resolution" value="1.83 A"/>
    <property type="chains" value="f=1-179"/>
</dbReference>
<dbReference type="PDB" id="8CGD">
    <property type="method" value="EM"/>
    <property type="resolution" value="1.98 A"/>
    <property type="chains" value="f=1-179"/>
</dbReference>
<dbReference type="PDB" id="8EIU">
    <property type="method" value="EM"/>
    <property type="resolution" value="2.24 A"/>
    <property type="chains" value="f=1-179"/>
</dbReference>
<dbReference type="PDB" id="8EKC">
    <property type="method" value="EM"/>
    <property type="resolution" value="2.70 A"/>
    <property type="chains" value="F=1-179"/>
</dbReference>
<dbReference type="PDB" id="8EMM">
    <property type="method" value="EM"/>
    <property type="resolution" value="2.10 A"/>
    <property type="chains" value="f=1-179"/>
</dbReference>
<dbReference type="PDB" id="8FIZ">
    <property type="method" value="EM"/>
    <property type="resolution" value="3.80 A"/>
    <property type="chains" value="BG=1-179"/>
</dbReference>
<dbReference type="PDB" id="8FTO">
    <property type="method" value="EM"/>
    <property type="resolution" value="1.85 A"/>
    <property type="chains" value="f=1-179"/>
</dbReference>
<dbReference type="PDB" id="8FZD">
    <property type="method" value="EM"/>
    <property type="resolution" value="3.10 A"/>
    <property type="chains" value="F=1-179"/>
</dbReference>
<dbReference type="PDB" id="8FZE">
    <property type="method" value="EM"/>
    <property type="resolution" value="3.00 A"/>
    <property type="chains" value="F=1-179"/>
</dbReference>
<dbReference type="PDB" id="8FZF">
    <property type="method" value="EM"/>
    <property type="resolution" value="3.20 A"/>
    <property type="chains" value="F=1-179"/>
</dbReference>
<dbReference type="PDB" id="8FZG">
    <property type="method" value="EM"/>
    <property type="resolution" value="3.10 A"/>
    <property type="chains" value="F=1-179"/>
</dbReference>
<dbReference type="PDB" id="8FZH">
    <property type="method" value="EM"/>
    <property type="resolution" value="2.90 A"/>
    <property type="chains" value="F=1-179"/>
</dbReference>
<dbReference type="PDB" id="8FZI">
    <property type="method" value="EM"/>
    <property type="resolution" value="3.10 A"/>
    <property type="chains" value="F=1-179"/>
</dbReference>
<dbReference type="PDB" id="8FZJ">
    <property type="method" value="EM"/>
    <property type="resolution" value="3.00 A"/>
    <property type="chains" value="F=1-179"/>
</dbReference>
<dbReference type="PDB" id="8G2U">
    <property type="method" value="EM"/>
    <property type="resolution" value="3.00 A"/>
    <property type="chains" value="F=2-179"/>
</dbReference>
<dbReference type="PDB" id="8G31">
    <property type="method" value="EM"/>
    <property type="resolution" value="3.20 A"/>
    <property type="chains" value="F=2-179"/>
</dbReference>
<dbReference type="PDB" id="8G34">
    <property type="method" value="EM"/>
    <property type="resolution" value="3.20 A"/>
    <property type="chains" value="F=2-179"/>
</dbReference>
<dbReference type="PDB" id="8G38">
    <property type="method" value="EM"/>
    <property type="resolution" value="3.20 A"/>
    <property type="chains" value="F=2-179"/>
</dbReference>
<dbReference type="PDB" id="8G6W">
    <property type="method" value="EM"/>
    <property type="resolution" value="2.02 A"/>
    <property type="chains" value="f=1-179"/>
</dbReference>
<dbReference type="PDB" id="8G6X">
    <property type="method" value="EM"/>
    <property type="resolution" value="2.31 A"/>
    <property type="chains" value="f=1-179"/>
</dbReference>
<dbReference type="PDB" id="8G6Y">
    <property type="method" value="EM"/>
    <property type="resolution" value="2.09 A"/>
    <property type="chains" value="f=1-179"/>
</dbReference>
<dbReference type="PDB" id="8G7P">
    <property type="method" value="EM"/>
    <property type="resolution" value="2.90 A"/>
    <property type="chains" value="F=1-179"/>
</dbReference>
<dbReference type="PDB" id="8G7Q">
    <property type="method" value="EM"/>
    <property type="resolution" value="3.10 A"/>
    <property type="chains" value="F=1-179"/>
</dbReference>
<dbReference type="PDB" id="8G7R">
    <property type="method" value="EM"/>
    <property type="resolution" value="2.80 A"/>
    <property type="chains" value="F=1-179"/>
</dbReference>
<dbReference type="PDB" id="8G7S">
    <property type="method" value="EM"/>
    <property type="resolution" value="3.10 A"/>
    <property type="chains" value="F=1-179"/>
</dbReference>
<dbReference type="PDB" id="8HSP">
    <property type="method" value="EM"/>
    <property type="resolution" value="2.32 A"/>
    <property type="chains" value="f=1-179"/>
</dbReference>
<dbReference type="PDB" id="8HTZ">
    <property type="method" value="EM"/>
    <property type="resolution" value="2.40 A"/>
    <property type="chains" value="f=1-179"/>
</dbReference>
<dbReference type="PDB" id="8HU1">
    <property type="method" value="EM"/>
    <property type="resolution" value="2.69 A"/>
    <property type="chains" value="f=1-179"/>
</dbReference>
<dbReference type="PDB" id="8IFB">
    <property type="method" value="EM"/>
    <property type="resolution" value="2.43 A"/>
    <property type="chains" value="f=1-179"/>
</dbReference>
<dbReference type="PDB" id="8IFC">
    <property type="method" value="EM"/>
    <property type="resolution" value="2.90 A"/>
    <property type="chains" value="f=1-179"/>
</dbReference>
<dbReference type="PDB" id="8J1Z">
    <property type="method" value="EM"/>
    <property type="resolution" value="2.60 A"/>
    <property type="chains" value="f=1-179"/>
</dbReference>
<dbReference type="PDB" id="8P16">
    <property type="method" value="EM"/>
    <property type="resolution" value="2.77 A"/>
    <property type="chains" value="E=1-179"/>
</dbReference>
<dbReference type="PDB" id="8P17">
    <property type="method" value="EM"/>
    <property type="resolution" value="2.78 A"/>
    <property type="chains" value="E=1-179"/>
</dbReference>
<dbReference type="PDB" id="8P18">
    <property type="method" value="EM"/>
    <property type="resolution" value="2.77 A"/>
    <property type="chains" value="E=1-179"/>
</dbReference>
<dbReference type="PDB" id="8PEG">
    <property type="method" value="EM"/>
    <property type="resolution" value="3.30 A"/>
    <property type="chains" value="e=1-179"/>
</dbReference>
<dbReference type="PDB" id="8PHJ">
    <property type="method" value="EM"/>
    <property type="resolution" value="3.67 A"/>
    <property type="chains" value="f=1-179"/>
</dbReference>
<dbReference type="PDB" id="8PKL">
    <property type="method" value="EM"/>
    <property type="resolution" value="3.09 A"/>
    <property type="chains" value="e=1-179"/>
</dbReference>
<dbReference type="PDB" id="8PVA">
    <property type="method" value="EM"/>
    <property type="resolution" value="4.50 A"/>
    <property type="chains" value="f=1-179"/>
</dbReference>
<dbReference type="PDB" id="8Q4F">
    <property type="method" value="EM"/>
    <property type="resolution" value="3.10 A"/>
    <property type="chains" value="f=1-179"/>
</dbReference>
<dbReference type="PDB" id="8QBT">
    <property type="method" value="EM"/>
    <property type="resolution" value="2.20 A"/>
    <property type="chains" value="F=1-179"/>
</dbReference>
<dbReference type="PDB" id="8QK7">
    <property type="method" value="EM"/>
    <property type="resolution" value="2.77 A"/>
    <property type="chains" value="E=1-179"/>
</dbReference>
<dbReference type="PDB" id="8QOA">
    <property type="method" value="EM"/>
    <property type="resolution" value="2.00 A"/>
    <property type="chains" value="f=1-179"/>
</dbReference>
<dbReference type="PDB" id="8R3V">
    <property type="method" value="EM"/>
    <property type="resolution" value="3.28 A"/>
    <property type="chains" value="e2=1-179"/>
</dbReference>
<dbReference type="PDB" id="8R6C">
    <property type="method" value="EM"/>
    <property type="resolution" value="2.20 A"/>
    <property type="chains" value="f=1-179"/>
</dbReference>
<dbReference type="PDB" id="8R8M">
    <property type="method" value="EM"/>
    <property type="resolution" value="2.40 A"/>
    <property type="chains" value="f=1-179"/>
</dbReference>
<dbReference type="PDB" id="8RCL">
    <property type="method" value="EM"/>
    <property type="resolution" value="3.49 A"/>
    <property type="chains" value="e2=1-179"/>
</dbReference>
<dbReference type="PDB" id="8RCM">
    <property type="method" value="EM"/>
    <property type="resolution" value="3.59 A"/>
    <property type="chains" value="e2=1-179"/>
</dbReference>
<dbReference type="PDB" id="8RCS">
    <property type="method" value="EM"/>
    <property type="resolution" value="4.46 A"/>
    <property type="chains" value="e2=1-179"/>
</dbReference>
<dbReference type="PDB" id="8RCT">
    <property type="method" value="EM"/>
    <property type="resolution" value="5.32 A"/>
    <property type="chains" value="e2=1-179"/>
</dbReference>
<dbReference type="PDB" id="8RPY">
    <property type="method" value="EM"/>
    <property type="resolution" value="2.64 A"/>
    <property type="chains" value="F=2-178"/>
</dbReference>
<dbReference type="PDB" id="8RPZ">
    <property type="method" value="EM"/>
    <property type="resolution" value="2.44 A"/>
    <property type="chains" value="F=2-178"/>
</dbReference>
<dbReference type="PDB" id="8RQ0">
    <property type="method" value="EM"/>
    <property type="resolution" value="2.44 A"/>
    <property type="chains" value="F=2-178"/>
</dbReference>
<dbReference type="PDB" id="8RQ2">
    <property type="method" value="EM"/>
    <property type="resolution" value="2.44 A"/>
    <property type="chains" value="F=2-178"/>
</dbReference>
<dbReference type="PDB" id="8SYL">
    <property type="method" value="EM"/>
    <property type="resolution" value="2.90 A"/>
    <property type="chains" value="F=1-179"/>
</dbReference>
<dbReference type="PDB" id="8T5D">
    <property type="method" value="EM"/>
    <property type="resolution" value="3.20 A"/>
    <property type="chains" value="F=2-179"/>
</dbReference>
<dbReference type="PDB" id="8T5H">
    <property type="method" value="EM"/>
    <property type="resolution" value="3.30 A"/>
    <property type="chains" value="F=2-179"/>
</dbReference>
<dbReference type="PDB" id="8VS9">
    <property type="method" value="EM"/>
    <property type="resolution" value="3.90 A"/>
    <property type="chains" value="L05=1-179"/>
</dbReference>
<dbReference type="PDB" id="8VSA">
    <property type="method" value="EM"/>
    <property type="resolution" value="3.70 A"/>
    <property type="chains" value="L05=1-179"/>
</dbReference>
<dbReference type="PDB" id="8W51">
    <property type="method" value="EM"/>
    <property type="resolution" value="2.40 A"/>
    <property type="chains" value="F=1-179"/>
</dbReference>
<dbReference type="PDB" id="8YUO">
    <property type="method" value="EM"/>
    <property type="resolution" value="2.25 A"/>
    <property type="chains" value="f=1-179"/>
</dbReference>
<dbReference type="PDB" id="8YUP">
    <property type="method" value="EM"/>
    <property type="resolution" value="2.39 A"/>
    <property type="chains" value="f=1-179"/>
</dbReference>
<dbReference type="PDB" id="8YUQ">
    <property type="method" value="EM"/>
    <property type="resolution" value="2.41 A"/>
    <property type="chains" value="f=1-179"/>
</dbReference>
<dbReference type="PDB" id="8YUR">
    <property type="method" value="EM"/>
    <property type="resolution" value="2.47 A"/>
    <property type="chains" value="f=1-179"/>
</dbReference>
<dbReference type="PDB" id="8YUS">
    <property type="method" value="EM"/>
    <property type="resolution" value="2.43 A"/>
    <property type="chains" value="f=1-179"/>
</dbReference>
<dbReference type="PDB" id="9D89">
    <property type="method" value="EM"/>
    <property type="resolution" value="1.95 A"/>
    <property type="chains" value="f=2-178"/>
</dbReference>
<dbReference type="PDB" id="9FBV">
    <property type="method" value="EM"/>
    <property type="resolution" value="2.40 A"/>
    <property type="chains" value="f=1-179"/>
</dbReference>
<dbReference type="PDB" id="9GFT">
    <property type="method" value="EM"/>
    <property type="resolution" value="3.10 A"/>
    <property type="chains" value="Aa/S=1-179"/>
</dbReference>
<dbReference type="PDB" id="9GGR">
    <property type="method" value="EM"/>
    <property type="resolution" value="3.20 A"/>
    <property type="chains" value="Aa/S=1-179"/>
</dbReference>
<dbReference type="PDB" id="9H3P">
    <property type="method" value="EM"/>
    <property type="resolution" value="7.06 A"/>
    <property type="chains" value="F=2-178"/>
</dbReference>
<dbReference type="PDB" id="9H3Q">
    <property type="method" value="EM"/>
    <property type="resolution" value="4.02 A"/>
    <property type="chains" value="F=2-178"/>
</dbReference>
<dbReference type="PDB" id="9H3R">
    <property type="method" value="EM"/>
    <property type="resolution" value="4.12 A"/>
    <property type="chains" value="F=2-178"/>
</dbReference>
<dbReference type="PDB" id="9H3S">
    <property type="method" value="EM"/>
    <property type="resolution" value="4.16 A"/>
    <property type="chains" value="F=2-178"/>
</dbReference>
<dbReference type="PDB" id="9H3V">
    <property type="method" value="EM"/>
    <property type="resolution" value="3.55 A"/>
    <property type="chains" value="F=2-178"/>
</dbReference>
<dbReference type="PDB" id="9H3W">
    <property type="method" value="EM"/>
    <property type="resolution" value="5.38 A"/>
    <property type="chains" value="F=2-178"/>
</dbReference>
<dbReference type="PDB" id="9H3X">
    <property type="method" value="EM"/>
    <property type="resolution" value="4.12 A"/>
    <property type="chains" value="F=2-178"/>
</dbReference>
<dbReference type="PDB" id="9H3Y">
    <property type="method" value="EM"/>
    <property type="resolution" value="3.09 A"/>
    <property type="chains" value="F=2-178"/>
</dbReference>
<dbReference type="PDB" id="9H3Z">
    <property type="method" value="EM"/>
    <property type="resolution" value="2.98 A"/>
    <property type="chains" value="F=2-178"/>
</dbReference>
<dbReference type="PDB" id="9HA4">
    <property type="method" value="EM"/>
    <property type="resolution" value="4.26 A"/>
    <property type="chains" value="F=2-178"/>
</dbReference>
<dbReference type="PDB" id="9HA6">
    <property type="method" value="EM"/>
    <property type="resolution" value="3.08 A"/>
    <property type="chains" value="F=2-178"/>
</dbReference>
<dbReference type="PDB" id="9HA7">
    <property type="method" value="EM"/>
    <property type="resolution" value="4.37 A"/>
    <property type="chains" value="F=2-178"/>
</dbReference>
<dbReference type="PDB" id="9MOR">
    <property type="method" value="EM"/>
    <property type="resolution" value="2.65 A"/>
    <property type="chains" value="E=1-179"/>
</dbReference>
<dbReference type="PDB" id="9MQ4">
    <property type="method" value="EM"/>
    <property type="resolution" value="2.78 A"/>
    <property type="chains" value="E=1-179"/>
</dbReference>
<dbReference type="PDBsum" id="1ML5"/>
<dbReference type="PDBsum" id="2J28"/>
<dbReference type="PDBsum" id="2RDO"/>
<dbReference type="PDBsum" id="3BBX"/>
<dbReference type="PDBsum" id="3J5L"/>
<dbReference type="PDBsum" id="3J5S"/>
<dbReference type="PDBsum" id="3J7Z"/>
<dbReference type="PDBsum" id="3J8G"/>
<dbReference type="PDBsum" id="3J9Y"/>
<dbReference type="PDBsum" id="3J9Z"/>
<dbReference type="PDBsum" id="3JA1"/>
<dbReference type="PDBsum" id="3JBU"/>
<dbReference type="PDBsum" id="3JBV"/>
<dbReference type="PDBsum" id="3JCD"/>
<dbReference type="PDBsum" id="3JCE"/>
<dbReference type="PDBsum" id="3JCJ"/>
<dbReference type="PDBsum" id="3JCN"/>
<dbReference type="PDBsum" id="4CSU"/>
<dbReference type="PDBsum" id="4U1U"/>
<dbReference type="PDBsum" id="4U1V"/>
<dbReference type="PDBsum" id="4U20"/>
<dbReference type="PDBsum" id="4U24"/>
<dbReference type="PDBsum" id="4U25"/>
<dbReference type="PDBsum" id="4U26"/>
<dbReference type="PDBsum" id="4U27"/>
<dbReference type="PDBsum" id="4UY8"/>
<dbReference type="PDBsum" id="4V47"/>
<dbReference type="PDBsum" id="4V48"/>
<dbReference type="PDBsum" id="4V4H"/>
<dbReference type="PDBsum" id="4V4Q"/>
<dbReference type="PDBsum" id="4V4V"/>
<dbReference type="PDBsum" id="4V4W"/>
<dbReference type="PDBsum" id="4V50"/>
<dbReference type="PDBsum" id="4V52"/>
<dbReference type="PDBsum" id="4V53"/>
<dbReference type="PDBsum" id="4V54"/>
<dbReference type="PDBsum" id="4V55"/>
<dbReference type="PDBsum" id="4V56"/>
<dbReference type="PDBsum" id="4V57"/>
<dbReference type="PDBsum" id="4V5B"/>
<dbReference type="PDBsum" id="4V5H"/>
<dbReference type="PDBsum" id="4V5Y"/>
<dbReference type="PDBsum" id="4V64"/>
<dbReference type="PDBsum" id="4V65"/>
<dbReference type="PDBsum" id="4V66"/>
<dbReference type="PDBsum" id="4V69"/>
<dbReference type="PDBsum" id="4V6C"/>
<dbReference type="PDBsum" id="4V6D"/>
<dbReference type="PDBsum" id="4V6E"/>
<dbReference type="PDBsum" id="4V6K"/>
<dbReference type="PDBsum" id="4V6L"/>
<dbReference type="PDBsum" id="4V6M"/>
<dbReference type="PDBsum" id="4V6N"/>
<dbReference type="PDBsum" id="4V6O"/>
<dbReference type="PDBsum" id="4V6P"/>
<dbReference type="PDBsum" id="4V6Q"/>
<dbReference type="PDBsum" id="4V6R"/>
<dbReference type="PDBsum" id="4V6S"/>
<dbReference type="PDBsum" id="4V6T"/>
<dbReference type="PDBsum" id="4V6V"/>
<dbReference type="PDBsum" id="4V6Y"/>
<dbReference type="PDBsum" id="4V6Z"/>
<dbReference type="PDBsum" id="4V70"/>
<dbReference type="PDBsum" id="4V71"/>
<dbReference type="PDBsum" id="4V72"/>
<dbReference type="PDBsum" id="4V73"/>
<dbReference type="PDBsum" id="4V74"/>
<dbReference type="PDBsum" id="4V75"/>
<dbReference type="PDBsum" id="4V76"/>
<dbReference type="PDBsum" id="4V77"/>
<dbReference type="PDBsum" id="4V78"/>
<dbReference type="PDBsum" id="4V79"/>
<dbReference type="PDBsum" id="4V7A"/>
<dbReference type="PDBsum" id="4V7B"/>
<dbReference type="PDBsum" id="4V7C"/>
<dbReference type="PDBsum" id="4V7D"/>
<dbReference type="PDBsum" id="4V7I"/>
<dbReference type="PDBsum" id="4V7S"/>
<dbReference type="PDBsum" id="4V7T"/>
<dbReference type="PDBsum" id="4V7U"/>
<dbReference type="PDBsum" id="4V7V"/>
<dbReference type="PDBsum" id="4V85"/>
<dbReference type="PDBsum" id="4V89"/>
<dbReference type="PDBsum" id="4V9C"/>
<dbReference type="PDBsum" id="4V9D"/>
<dbReference type="PDBsum" id="4V9O"/>
<dbReference type="PDBsum" id="4V9P"/>
<dbReference type="PDBsum" id="4WF1"/>
<dbReference type="PDBsum" id="4WOI"/>
<dbReference type="PDBsum" id="4WWW"/>
<dbReference type="PDBsum" id="4YBB"/>
<dbReference type="PDBsum" id="5ADY"/>
<dbReference type="PDBsum" id="5AFI"/>
<dbReference type="PDBsum" id="5AKA"/>
<dbReference type="PDBsum" id="5GAD"/>
<dbReference type="PDBsum" id="5GAE"/>
<dbReference type="PDBsum" id="5GAF"/>
<dbReference type="PDBsum" id="5GAG"/>
<dbReference type="PDBsum" id="5GAH"/>
<dbReference type="PDBsum" id="5H5U"/>
<dbReference type="PDBsum" id="5IQR"/>
<dbReference type="PDBsum" id="5IT8"/>
<dbReference type="PDBsum" id="5J5B"/>
<dbReference type="PDBsum" id="5J7L"/>
<dbReference type="PDBsum" id="5J88"/>
<dbReference type="PDBsum" id="5J8A"/>
<dbReference type="PDBsum" id="5J91"/>
<dbReference type="PDBsum" id="5JC9"/>
<dbReference type="PDBsum" id="5JTE"/>
<dbReference type="PDBsum" id="5JU8"/>
<dbReference type="PDBsum" id="5KCR"/>
<dbReference type="PDBsum" id="5KCS"/>
<dbReference type="PDBsum" id="5KPS"/>
<dbReference type="PDBsum" id="5KPV"/>
<dbReference type="PDBsum" id="5KPW"/>
<dbReference type="PDBsum" id="5KPX"/>
<dbReference type="PDBsum" id="5L3P"/>
<dbReference type="PDBsum" id="5LZA"/>
<dbReference type="PDBsum" id="5LZB"/>
<dbReference type="PDBsum" id="5LZC"/>
<dbReference type="PDBsum" id="5LZD"/>
<dbReference type="PDBsum" id="5LZE"/>
<dbReference type="PDBsum" id="5LZF"/>
<dbReference type="PDBsum" id="5MDV"/>
<dbReference type="PDBsum" id="5MDW"/>
<dbReference type="PDBsum" id="5MDY"/>
<dbReference type="PDBsum" id="5MDZ"/>
<dbReference type="PDBsum" id="5MGP"/>
<dbReference type="PDBsum" id="5NCO"/>
<dbReference type="PDBsum" id="5NP6"/>
<dbReference type="PDBsum" id="5NWY"/>
<dbReference type="PDBsum" id="5O2R"/>
<dbReference type="PDBsum" id="5U4I"/>
<dbReference type="PDBsum" id="5U9F"/>
<dbReference type="PDBsum" id="5U9G"/>
<dbReference type="PDBsum" id="5UYK"/>
<dbReference type="PDBsum" id="5UYL"/>
<dbReference type="PDBsum" id="5UYM"/>
<dbReference type="PDBsum" id="5UYN"/>
<dbReference type="PDBsum" id="5UYP"/>
<dbReference type="PDBsum" id="5UYQ"/>
<dbReference type="PDBsum" id="5WDT"/>
<dbReference type="PDBsum" id="5WE4"/>
<dbReference type="PDBsum" id="5WE6"/>
<dbReference type="PDBsum" id="5WF0"/>
<dbReference type="PDBsum" id="5WFK"/>
<dbReference type="PDBsum" id="5WFS"/>
<dbReference type="PDBsum" id="6BU8"/>
<dbReference type="PDBsum" id="6BY1"/>
<dbReference type="PDBsum" id="6C4I"/>
<dbReference type="PDBsum" id="6DNC"/>
<dbReference type="PDBsum" id="6ENF"/>
<dbReference type="PDBsum" id="6ENJ"/>
<dbReference type="PDBsum" id="6ENU"/>
<dbReference type="PDBsum" id="6GBZ"/>
<dbReference type="PDBsum" id="6GC0"/>
<dbReference type="PDBsum" id="6GC4"/>
<dbReference type="PDBsum" id="6GC8"/>
<dbReference type="PDBsum" id="6GWT"/>
<dbReference type="PDBsum" id="6GXM"/>
<dbReference type="PDBsum" id="6GXN"/>
<dbReference type="PDBsum" id="6GXO"/>
<dbReference type="PDBsum" id="6GXP"/>
<dbReference type="PDBsum" id="6H4N"/>
<dbReference type="PDBsum" id="6H58"/>
<dbReference type="PDBsum" id="6HRM"/>
<dbReference type="PDBsum" id="6I0Y"/>
<dbReference type="PDBsum" id="6I7V"/>
<dbReference type="PDBsum" id="6O9J"/>
<dbReference type="PDBsum" id="6O9K"/>
<dbReference type="PDBsum" id="6OFX"/>
<dbReference type="PDBsum" id="6OG7"/>
<dbReference type="PDBsum" id="6OGF"/>
<dbReference type="PDBsum" id="6OGG"/>
<dbReference type="PDBsum" id="6OGI"/>
<dbReference type="PDBsum" id="6OM6"/>
<dbReference type="PDBsum" id="6ORE"/>
<dbReference type="PDBsum" id="6ORL"/>
<dbReference type="PDBsum" id="6OSK"/>
<dbReference type="PDBsum" id="6OSQ"/>
<dbReference type="PDBsum" id="6OST"/>
<dbReference type="PDBsum" id="6OT3"/>
<dbReference type="PDBsum" id="6OUO"/>
<dbReference type="PDBsum" id="6PJ6"/>
<dbReference type="PDBsum" id="6Q97"/>
<dbReference type="PDBsum" id="6Q98"/>
<dbReference type="PDBsum" id="6Q9A"/>
<dbReference type="PDBsum" id="6QDW"/>
<dbReference type="PDBsum" id="6QUL"/>
<dbReference type="PDBsum" id="6S0K"/>
<dbReference type="PDBsum" id="6SZS"/>
<dbReference type="PDBsum" id="6TBV"/>
<dbReference type="PDBsum" id="6TC3"/>
<dbReference type="PDBsum" id="6U48"/>
<dbReference type="PDBsum" id="6VU3"/>
<dbReference type="PDBsum" id="6VYQ"/>
<dbReference type="PDBsum" id="6VYR"/>
<dbReference type="PDBsum" id="6VYS"/>
<dbReference type="PDBsum" id="6VYT"/>
<dbReference type="PDBsum" id="6VYU"/>
<dbReference type="PDBsum" id="6VYW"/>
<dbReference type="PDBsum" id="6VYX"/>
<dbReference type="PDBsum" id="6VYY"/>
<dbReference type="PDBsum" id="6VYZ"/>
<dbReference type="PDBsum" id="6VZ2"/>
<dbReference type="PDBsum" id="6VZ3"/>
<dbReference type="PDBsum" id="6VZ5"/>
<dbReference type="PDBsum" id="6VZ7"/>
<dbReference type="PDBsum" id="6VZJ"/>
<dbReference type="PDBsum" id="6WD0"/>
<dbReference type="PDBsum" id="6WD1"/>
<dbReference type="PDBsum" id="6WD2"/>
<dbReference type="PDBsum" id="6WD3"/>
<dbReference type="PDBsum" id="6WD4"/>
<dbReference type="PDBsum" id="6WD5"/>
<dbReference type="PDBsum" id="6WD6"/>
<dbReference type="PDBsum" id="6WD7"/>
<dbReference type="PDBsum" id="6WD8"/>
<dbReference type="PDBsum" id="6WD9"/>
<dbReference type="PDBsum" id="6WDA"/>
<dbReference type="PDBsum" id="6WDB"/>
<dbReference type="PDBsum" id="6WDC"/>
<dbReference type="PDBsum" id="6WDD"/>
<dbReference type="PDBsum" id="6WDE"/>
<dbReference type="PDBsum" id="6WDF"/>
<dbReference type="PDBsum" id="6WDG"/>
<dbReference type="PDBsum" id="6WDH"/>
<dbReference type="PDBsum" id="6WDI"/>
<dbReference type="PDBsum" id="6WDJ"/>
<dbReference type="PDBsum" id="6WDK"/>
<dbReference type="PDBsum" id="6WDL"/>
<dbReference type="PDBsum" id="6WDM"/>
<dbReference type="PDBsum" id="6WNT"/>
<dbReference type="PDBsum" id="6WNV"/>
<dbReference type="PDBsum" id="6WNW"/>
<dbReference type="PDBsum" id="6X6T"/>
<dbReference type="PDBsum" id="6X7F"/>
<dbReference type="PDBsum" id="6X7K"/>
<dbReference type="PDBsum" id="6X9Q"/>
<dbReference type="PDBsum" id="6XDQ"/>
<dbReference type="PDBsum" id="6XDR"/>
<dbReference type="PDBsum" id="6XGF"/>
<dbReference type="PDBsum" id="6XII"/>
<dbReference type="PDBsum" id="6XIJ"/>
<dbReference type="PDBsum" id="6XZ7"/>
<dbReference type="PDBsum" id="6XZA"/>
<dbReference type="PDBsum" id="6XZB"/>
<dbReference type="PDBsum" id="6Y69"/>
<dbReference type="PDBsum" id="6YS3"/>
<dbReference type="PDBsum" id="6YSR"/>
<dbReference type="PDBsum" id="6YSS"/>
<dbReference type="PDBsum" id="6YST"/>
<dbReference type="PDBsum" id="6YSU"/>
<dbReference type="PDBsum" id="6ZTJ"/>
<dbReference type="PDBsum" id="6ZTL"/>
<dbReference type="PDBsum" id="6ZTM"/>
<dbReference type="PDBsum" id="6ZTN"/>
<dbReference type="PDBsum" id="6ZTO"/>
<dbReference type="PDBsum" id="6ZTP"/>
<dbReference type="PDBsum" id="6ZU1"/>
<dbReference type="PDBsum" id="7ABZ"/>
<dbReference type="PDBsum" id="7AC7"/>
<dbReference type="PDBsum" id="7ACJ"/>
<dbReference type="PDBsum" id="7ACR"/>
<dbReference type="PDBsum" id="7B5K"/>
<dbReference type="PDBsum" id="7BL2"/>
<dbReference type="PDBsum" id="7BL3"/>
<dbReference type="PDBsum" id="7BL4"/>
<dbReference type="PDBsum" id="7BL5"/>
<dbReference type="PDBsum" id="7BL6"/>
<dbReference type="PDBsum" id="7BV8"/>
<dbReference type="PDBsum" id="7D6Z"/>
<dbReference type="PDBsum" id="7D80"/>
<dbReference type="PDBsum" id="7JSS"/>
<dbReference type="PDBsum" id="7JSW"/>
<dbReference type="PDBsum" id="7JSZ"/>
<dbReference type="PDBsum" id="7JT1"/>
<dbReference type="PDBsum" id="7JT2"/>
<dbReference type="PDBsum" id="7JT3"/>
<dbReference type="PDBsum" id="7K00"/>
<dbReference type="PDBsum" id="7K50"/>
<dbReference type="PDBsum" id="7K51"/>
<dbReference type="PDBsum" id="7K52"/>
<dbReference type="PDBsum" id="7K53"/>
<dbReference type="PDBsum" id="7K54"/>
<dbReference type="PDBsum" id="7K55"/>
<dbReference type="PDBsum" id="7LV0"/>
<dbReference type="PDBsum" id="7LVK"/>
<dbReference type="PDBsum" id="7M5D"/>
<dbReference type="PDBsum" id="7N1P"/>
<dbReference type="PDBsum" id="7N2C"/>
<dbReference type="PDBsum" id="7N2U"/>
<dbReference type="PDBsum" id="7N2V"/>
<dbReference type="PDBsum" id="7N30"/>
<dbReference type="PDBsum" id="7N31"/>
<dbReference type="PDBsum" id="7NBU"/>
<dbReference type="PDBsum" id="7NWT"/>
<dbReference type="PDBsum" id="7O19"/>
<dbReference type="PDBsum" id="7O1A"/>
<dbReference type="PDBsum" id="7O1C"/>
<dbReference type="PDBsum" id="7OIZ"/>
<dbReference type="PDBsum" id="7OJ0"/>
<dbReference type="PDBsum" id="7P3K"/>
<dbReference type="PDBsum" id="7PJS"/>
<dbReference type="PDBsum" id="7PJT"/>
<dbReference type="PDBsum" id="7PJU"/>
<dbReference type="PDBsum" id="7PJV"/>
<dbReference type="PDBsum" id="7PJW"/>
<dbReference type="PDBsum" id="7PJX"/>
<dbReference type="PDBsum" id="7PJY"/>
<dbReference type="PDBsum" id="7PJZ"/>
<dbReference type="PDBsum" id="7Q4K"/>
<dbReference type="PDBsum" id="7QG8"/>
<dbReference type="PDBsum" id="7QGH"/>
<dbReference type="PDBsum" id="7QGN"/>
<dbReference type="PDBsum" id="7QGR"/>
<dbReference type="PDBsum" id="7S1G"/>
<dbReference type="PDBsum" id="7S1H"/>
<dbReference type="PDBsum" id="7S1I"/>
<dbReference type="PDBsum" id="7S1J"/>
<dbReference type="PDBsum" id="7S1K"/>
<dbReference type="PDBsum" id="7SA4"/>
<dbReference type="PDBsum" id="7SS9"/>
<dbReference type="PDBsum" id="7SSD"/>
<dbReference type="PDBsum" id="7SSL"/>
<dbReference type="PDBsum" id="7SSN"/>
<dbReference type="PDBsum" id="7SSO"/>
<dbReference type="PDBsum" id="7SSW"/>
<dbReference type="PDBsum" id="7ST2"/>
<dbReference type="PDBsum" id="7ST6"/>
<dbReference type="PDBsum" id="7ST7"/>
<dbReference type="PDBsum" id="7TOS"/>
<dbReference type="PDBsum" id="7UG7"/>
<dbReference type="PDBsum" id="7UPH"/>
<dbReference type="PDBsum" id="7Y7C"/>
<dbReference type="PDBsum" id="7Y7D"/>
<dbReference type="PDBsum" id="7Y7E"/>
<dbReference type="PDBsum" id="7Y7F"/>
<dbReference type="PDBsum" id="7Y7G"/>
<dbReference type="PDBsum" id="7Y7H"/>
<dbReference type="PDBsum" id="7YLA"/>
<dbReference type="PDBsum" id="7Z20"/>
<dbReference type="PDBsum" id="7ZOD"/>
<dbReference type="PDBsum" id="7ZP8"/>
<dbReference type="PDBsum" id="7ZQ5"/>
<dbReference type="PDBsum" id="7ZQ6"/>
<dbReference type="PDBsum" id="7ZTA"/>
<dbReference type="PDBsum" id="8A3L"/>
<dbReference type="PDBsum" id="8AKN"/>
<dbReference type="PDBsum" id="8AM9"/>
<dbReference type="PDBsum" id="8ANA"/>
<dbReference type="PDBsum" id="8AP4"/>
<dbReference type="PDBsum" id="8AYE"/>
<dbReference type="PDBsum" id="8B0X"/>
<dbReference type="PDBsum" id="8BF7"/>
<dbReference type="PDBsum" id="8BGE"/>
<dbReference type="PDBsum" id="8BGH"/>
<dbReference type="PDBsum" id="8BH4"/>
<dbReference type="PDBsum" id="8BHJ"/>
<dbReference type="PDBsum" id="8BHL"/>
<dbReference type="PDBsum" id="8BHN"/>
<dbReference type="PDBsum" id="8BHP"/>
<dbReference type="PDBsum" id="8BIL"/>
<dbReference type="PDBsum" id="8BIM"/>
<dbReference type="PDBsum" id="8C8X"/>
<dbReference type="PDBsum" id="8C8Y"/>
<dbReference type="PDBsum" id="8C8Z"/>
<dbReference type="PDBsum" id="8C90"/>
<dbReference type="PDBsum" id="8C94"/>
<dbReference type="PDBsum" id="8C95"/>
<dbReference type="PDBsum" id="8CEU"/>
<dbReference type="PDBsum" id="8CGD"/>
<dbReference type="PDBsum" id="8EIU"/>
<dbReference type="PDBsum" id="8EKC"/>
<dbReference type="PDBsum" id="8EMM"/>
<dbReference type="PDBsum" id="8FIZ"/>
<dbReference type="PDBsum" id="8FTO"/>
<dbReference type="PDBsum" id="8FZD"/>
<dbReference type="PDBsum" id="8FZE"/>
<dbReference type="PDBsum" id="8FZF"/>
<dbReference type="PDBsum" id="8FZG"/>
<dbReference type="PDBsum" id="8FZH"/>
<dbReference type="PDBsum" id="8FZI"/>
<dbReference type="PDBsum" id="8FZJ"/>
<dbReference type="PDBsum" id="8G2U"/>
<dbReference type="PDBsum" id="8G31"/>
<dbReference type="PDBsum" id="8G34"/>
<dbReference type="PDBsum" id="8G38"/>
<dbReference type="PDBsum" id="8G6W"/>
<dbReference type="PDBsum" id="8G6X"/>
<dbReference type="PDBsum" id="8G6Y"/>
<dbReference type="PDBsum" id="8G7P"/>
<dbReference type="PDBsum" id="8G7Q"/>
<dbReference type="PDBsum" id="8G7R"/>
<dbReference type="PDBsum" id="8G7S"/>
<dbReference type="PDBsum" id="8HSP"/>
<dbReference type="PDBsum" id="8HTZ"/>
<dbReference type="PDBsum" id="8HU1"/>
<dbReference type="PDBsum" id="8IFB"/>
<dbReference type="PDBsum" id="8IFC"/>
<dbReference type="PDBsum" id="8J1Z"/>
<dbReference type="PDBsum" id="8P16"/>
<dbReference type="PDBsum" id="8P17"/>
<dbReference type="PDBsum" id="8P18"/>
<dbReference type="PDBsum" id="8PEG"/>
<dbReference type="PDBsum" id="8PHJ"/>
<dbReference type="PDBsum" id="8PKL"/>
<dbReference type="PDBsum" id="8PVA"/>
<dbReference type="PDBsum" id="8Q4F"/>
<dbReference type="PDBsum" id="8QBT"/>
<dbReference type="PDBsum" id="8QK7"/>
<dbReference type="PDBsum" id="8QOA"/>
<dbReference type="PDBsum" id="8R3V"/>
<dbReference type="PDBsum" id="8R6C"/>
<dbReference type="PDBsum" id="8R8M"/>
<dbReference type="PDBsum" id="8RCL"/>
<dbReference type="PDBsum" id="8RCM"/>
<dbReference type="PDBsum" id="8RCS"/>
<dbReference type="PDBsum" id="8RCT"/>
<dbReference type="PDBsum" id="8RPY"/>
<dbReference type="PDBsum" id="8RPZ"/>
<dbReference type="PDBsum" id="8RQ0"/>
<dbReference type="PDBsum" id="8RQ2"/>
<dbReference type="PDBsum" id="8SYL"/>
<dbReference type="PDBsum" id="8T5D"/>
<dbReference type="PDBsum" id="8T5H"/>
<dbReference type="PDBsum" id="8VS9"/>
<dbReference type="PDBsum" id="8VSA"/>
<dbReference type="PDBsum" id="8W51"/>
<dbReference type="PDBsum" id="8YUO"/>
<dbReference type="PDBsum" id="8YUP"/>
<dbReference type="PDBsum" id="8YUQ"/>
<dbReference type="PDBsum" id="8YUR"/>
<dbReference type="PDBsum" id="8YUS"/>
<dbReference type="PDBsum" id="9D89"/>
<dbReference type="PDBsum" id="9FBV"/>
<dbReference type="PDBsum" id="9GFT"/>
<dbReference type="PDBsum" id="9GGR"/>
<dbReference type="PDBsum" id="9H3P"/>
<dbReference type="PDBsum" id="9H3Q"/>
<dbReference type="PDBsum" id="9H3R"/>
<dbReference type="PDBsum" id="9H3S"/>
<dbReference type="PDBsum" id="9H3V"/>
<dbReference type="PDBsum" id="9H3W"/>
<dbReference type="PDBsum" id="9H3X"/>
<dbReference type="PDBsum" id="9H3Y"/>
<dbReference type="PDBsum" id="9H3Z"/>
<dbReference type="PDBsum" id="9HA4"/>
<dbReference type="PDBsum" id="9HA6"/>
<dbReference type="PDBsum" id="9HA7"/>
<dbReference type="PDBsum" id="9MOR"/>
<dbReference type="PDBsum" id="9MQ4"/>
<dbReference type="EMDB" id="EMD-0076"/>
<dbReference type="EMDB" id="EMD-0080"/>
<dbReference type="EMDB" id="EMD-0081"/>
<dbReference type="EMDB" id="EMD-0082"/>
<dbReference type="EMDB" id="EMD-0083"/>
<dbReference type="EMDB" id="EMD-0137"/>
<dbReference type="EMDB" id="EMD-0139"/>
<dbReference type="EMDB" id="EMD-0261"/>
<dbReference type="EMDB" id="EMD-0322"/>
<dbReference type="EMDB" id="EMD-10073"/>
<dbReference type="EMDB" id="EMD-10353"/>
<dbReference type="EMDB" id="EMD-10453"/>
<dbReference type="EMDB" id="EMD-10458"/>
<dbReference type="EMDB" id="EMD-10655"/>
<dbReference type="EMDB" id="EMD-10656"/>
<dbReference type="EMDB" id="EMD-10657"/>
<dbReference type="EMDB" id="EMD-10705"/>
<dbReference type="EMDB" id="EMD-10905"/>
<dbReference type="EMDB" id="EMD-10906"/>
<dbReference type="EMDB" id="EMD-10907"/>
<dbReference type="EMDB" id="EMD-10908"/>
<dbReference type="EMDB" id="EMD-11418"/>
<dbReference type="EMDB" id="EMD-11419"/>
<dbReference type="EMDB" id="EMD-11420"/>
<dbReference type="EMDB" id="EMD-11421"/>
<dbReference type="EMDB" id="EMD-11422"/>
<dbReference type="EMDB" id="EMD-11423"/>
<dbReference type="EMDB" id="EMD-11426"/>
<dbReference type="EMDB" id="EMD-11710"/>
<dbReference type="EMDB" id="EMD-11713"/>
<dbReference type="EMDB" id="EMD-11717"/>
<dbReference type="EMDB" id="EMD-11718"/>
<dbReference type="EMDB" id="EMD-12035"/>
<dbReference type="EMDB" id="EMD-12215"/>
<dbReference type="EMDB" id="EMD-12216"/>
<dbReference type="EMDB" id="EMD-12217"/>
<dbReference type="EMDB" id="EMD-12218"/>
<dbReference type="EMDB" id="EMD-12219"/>
<dbReference type="EMDB" id="EMD-12261"/>
<dbReference type="EMDB" id="EMD-12635"/>
<dbReference type="EMDB" id="EMD-12693"/>
<dbReference type="EMDB" id="EMD-12694"/>
<dbReference type="EMDB" id="EMD-12695"/>
<dbReference type="EMDB" id="EMD-12936"/>
<dbReference type="EMDB" id="EMD-12937"/>
<dbReference type="EMDB" id="EMD-13180"/>
<dbReference type="EMDB" id="EMD-13458"/>
<dbReference type="EMDB" id="EMD-13459"/>
<dbReference type="EMDB" id="EMD-13461"/>
<dbReference type="EMDB" id="EMD-13462"/>
<dbReference type="EMDB" id="EMD-13463"/>
<dbReference type="EMDB" id="EMD-13464"/>
<dbReference type="EMDB" id="EMD-13465"/>
<dbReference type="EMDB" id="EMD-13805"/>
<dbReference type="EMDB" id="EMD-13952"/>
<dbReference type="EMDB" id="EMD-13955"/>
<dbReference type="EMDB" id="EMD-13956"/>
<dbReference type="EMDB" id="EMD-13958"/>
<dbReference type="EMDB" id="EMD-14454"/>
<dbReference type="EMDB" id="EMD-14846"/>
<dbReference type="EMDB" id="EMD-14850"/>
<dbReference type="EMDB" id="EMD-14864"/>
<dbReference type="EMDB" id="EMD-14865"/>
<dbReference type="EMDB" id="EMD-14956"/>
<dbReference type="EMDB" id="EMD-15116"/>
<dbReference type="EMDB" id="EMD-15558"/>
<dbReference type="EMDB" id="EMD-15712"/>
<dbReference type="EMDB" id="EMD-15793"/>
<dbReference type="EMDB" id="EMD-16015"/>
<dbReference type="EMDB" id="EMD-16029"/>
<dbReference type="EMDB" id="EMD-16031"/>
<dbReference type="EMDB" id="EMD-16047"/>
<dbReference type="EMDB" id="EMD-16057"/>
<dbReference type="EMDB" id="EMD-16059"/>
<dbReference type="EMDB" id="EMD-16062"/>
<dbReference type="EMDB" id="EMD-16065"/>
<dbReference type="EMDB" id="EMD-16081"/>
<dbReference type="EMDB" id="EMD-16082"/>
<dbReference type="EMDB" id="EMD-16494"/>
<dbReference type="EMDB" id="EMD-16495"/>
<dbReference type="EMDB" id="EMD-16496"/>
<dbReference type="EMDB" id="EMD-16497"/>
<dbReference type="EMDB" id="EMD-16501"/>
<dbReference type="EMDB" id="EMD-16502"/>
<dbReference type="EMDB" id="EMD-16613"/>
<dbReference type="EMDB" id="EMD-16641"/>
<dbReference type="EMDB" id="EMD-17346"/>
<dbReference type="EMDB" id="EMD-17347"/>
<dbReference type="EMDB" id="EMD-17348"/>
<dbReference type="EMDB" id="EMD-17631"/>
<dbReference type="EMDB" id="EMD-17667"/>
<dbReference type="EMDB" id="EMD-17743"/>
<dbReference type="EMDB" id="EMD-17959"/>
<dbReference type="EMDB" id="EMD-18145"/>
<dbReference type="EMDB" id="EMD-18320"/>
<dbReference type="EMDB" id="EMD-18458"/>
<dbReference type="EMDB" id="EMD-18534"/>
<dbReference type="EMDB" id="EMD-18875"/>
<dbReference type="EMDB" id="EMD-18950"/>
<dbReference type="EMDB" id="EMD-19004"/>
<dbReference type="EMDB" id="EMD-19054"/>
<dbReference type="EMDB" id="EMD-19055"/>
<dbReference type="EMDB" id="EMD-19058"/>
<dbReference type="EMDB" id="EMD-19059"/>
<dbReference type="EMDB" id="EMD-19426"/>
<dbReference type="EMDB" id="EMD-19427"/>
<dbReference type="EMDB" id="EMD-19428"/>
<dbReference type="EMDB" id="EMD-19429"/>
<dbReference type="EMDB" id="EMD-20048"/>
<dbReference type="EMDB" id="EMD-20052"/>
<dbReference type="EMDB" id="EMD-21620"/>
<dbReference type="EMDB" id="EMD-21625"/>
<dbReference type="EMDB" id="EMD-21630"/>
<dbReference type="EMDB" id="EMD-21631"/>
<dbReference type="EMDB" id="EMD-21632"/>
<dbReference type="EMDB" id="EMD-21633"/>
<dbReference type="EMDB" id="EMD-21634"/>
<dbReference type="EMDB" id="EMD-21635"/>
<dbReference type="EMDB" id="EMD-21636"/>
<dbReference type="EMDB" id="EMD-21637"/>
<dbReference type="EMDB" id="EMD-21638"/>
<dbReference type="EMDB" id="EMD-21639"/>
<dbReference type="EMDB" id="EMD-21640"/>
<dbReference type="EMDB" id="EMD-21641"/>
<dbReference type="EMDB" id="EMD-21856"/>
<dbReference type="EMDB" id="EMD-21857"/>
<dbReference type="EMDB" id="EMD-21858"/>
<dbReference type="EMDB" id="EMD-22459"/>
<dbReference type="EMDB" id="EMD-22461"/>
<dbReference type="EMDB" id="EMD-22464"/>
<dbReference type="EMDB" id="EMD-22466"/>
<dbReference type="EMDB" id="EMD-22469"/>
<dbReference type="EMDB" id="EMD-22472"/>
<dbReference type="EMDB" id="EMD-22669"/>
<dbReference type="EMDB" id="EMD-22670"/>
<dbReference type="EMDB" id="EMD-22671"/>
<dbReference type="EMDB" id="EMD-22672"/>
<dbReference type="EMDB" id="EMD-22673"/>
<dbReference type="EMDB" id="EMD-22674"/>
<dbReference type="EMDB" id="EMD-23528"/>
<dbReference type="EMDB" id="EMD-24120"/>
<dbReference type="EMDB" id="EMD-24132"/>
<dbReference type="EMDB" id="EMD-24133"/>
<dbReference type="EMDB" id="EMD-24134"/>
<dbReference type="EMDB" id="EMD-24135"/>
<dbReference type="EMDB" id="EMD-24136"/>
<dbReference type="EMDB" id="EMD-24803"/>
<dbReference type="EMDB" id="EMD-25405"/>
<dbReference type="EMDB" id="EMD-25407"/>
<dbReference type="EMDB" id="EMD-25409"/>
<dbReference type="EMDB" id="EMD-25410"/>
<dbReference type="EMDB" id="EMD-25411"/>
<dbReference type="EMDB" id="EMD-25415"/>
<dbReference type="EMDB" id="EMD-25418"/>
<dbReference type="EMDB" id="EMD-25420"/>
<dbReference type="EMDB" id="EMD-25421"/>
<dbReference type="EMDB" id="EMD-30215"/>
<dbReference type="EMDB" id="EMD-30598"/>
<dbReference type="EMDB" id="EMD-30611"/>
<dbReference type="EMDB" id="EMD-33660"/>
<dbReference type="EMDB" id="EMD-33661"/>
<dbReference type="EMDB" id="EMD-33662"/>
<dbReference type="EMDB" id="EMD-33663"/>
<dbReference type="EMDB" id="EMD-33664"/>
<dbReference type="EMDB" id="EMD-33665"/>
<dbReference type="EMDB" id="EMD-33904"/>
<dbReference type="EMDB" id="EMD-3489"/>
<dbReference type="EMDB" id="EMD-3490"/>
<dbReference type="EMDB" id="EMD-3492"/>
<dbReference type="EMDB" id="EMD-3493"/>
<dbReference type="EMDB" id="EMD-35001"/>
<dbReference type="EMDB" id="EMD-35020"/>
<dbReference type="EMDB" id="EMD-35022"/>
<dbReference type="EMDB" id="EMD-3508"/>
<dbReference type="EMDB" id="EMD-35411"/>
<dbReference type="EMDB" id="EMD-35412"/>
<dbReference type="EMDB" id="EMD-35939"/>
<dbReference type="EMDB" id="EMD-3617"/>
<dbReference type="EMDB" id="EMD-3713"/>
<dbReference type="EMDB" id="EMD-37271"/>
<dbReference type="EMDB" id="EMD-3730"/>
<dbReference type="EMDB" id="EMD-3898"/>
<dbReference type="EMDB" id="EMD-3899"/>
<dbReference type="EMDB" id="EMD-3903"/>
<dbReference type="EMDB" id="EMD-39577"/>
<dbReference type="EMDB" id="EMD-39578"/>
<dbReference type="EMDB" id="EMD-39579"/>
<dbReference type="EMDB" id="EMD-39580"/>
<dbReference type="EMDB" id="EMD-39581"/>
<dbReference type="EMDB" id="EMD-4001"/>
<dbReference type="EMDB" id="EMD-4121"/>
<dbReference type="EMDB" id="EMD-4122"/>
<dbReference type="EMDB" id="EMD-4123"/>
<dbReference type="EMDB" id="EMD-4124"/>
<dbReference type="EMDB" id="EMD-4125"/>
<dbReference type="EMDB" id="EMD-4126"/>
<dbReference type="EMDB" id="EMD-4378"/>
<dbReference type="EMDB" id="EMD-4379"/>
<dbReference type="EMDB" id="EMD-4380"/>
<dbReference type="EMDB" id="EMD-4383"/>
<dbReference type="EMDB" id="EMD-4476"/>
<dbReference type="EMDB" id="EMD-4477"/>
<dbReference type="EMDB" id="EMD-4478"/>
<dbReference type="EMDB" id="EMD-4638"/>
<dbReference type="EMDB" id="EMD-48479"/>
<dbReference type="EMDB" id="EMD-48513"/>
<dbReference type="EMDB" id="EMD-50296"/>
<dbReference type="EMDB" id="EMD-51318"/>
<dbReference type="EMDB" id="EMD-51340"/>
<dbReference type="EMDB" id="EMD-51833"/>
<dbReference type="EMDB" id="EMD-51834"/>
<dbReference type="EMDB" id="EMD-51835"/>
<dbReference type="EMDB" id="EMD-51836"/>
<dbReference type="EMDB" id="EMD-51839"/>
<dbReference type="EMDB" id="EMD-51840"/>
<dbReference type="EMDB" id="EMD-51841"/>
<dbReference type="EMDB" id="EMD-51842"/>
<dbReference type="EMDB" id="EMD-51843"/>
<dbReference type="EMDB" id="EMD-51976"/>
<dbReference type="EMDB" id="EMD-51978"/>
<dbReference type="EMDB" id="EMD-51979"/>
<dbReference type="EMDB" id="EMD-6667"/>
<dbReference type="EMDB" id="EMD-7289"/>
<dbReference type="EMDB" id="EMD-7341"/>
<dbReference type="EMDB" id="EMD-8000"/>
<dbReference type="EMDB" id="EMD-8001"/>
<dbReference type="EMDB" id="EMD-8002"/>
<dbReference type="EMDB" id="EMD-8003"/>
<dbReference type="EMDB" id="EMD-8004"/>
<dbReference type="EMDB" id="EMD-8107"/>
<dbReference type="EMDB" id="EMD-8175"/>
<dbReference type="EMDB" id="EMD-8176"/>
<dbReference type="EMDB" id="EMD-8237"/>
<dbReference type="EMDB" id="EMD-8238"/>
<dbReference type="EMDB" id="EMD-8279"/>
<dbReference type="EMDB" id="EMD-8280"/>
<dbReference type="EMDB" id="EMD-8281"/>
<dbReference type="EMDB" id="EMD-8282"/>
<dbReference type="EMDB" id="EMD-8505"/>
<dbReference type="EMDB" id="EMD-8615"/>
<dbReference type="EMDB" id="EMD-8616"/>
<dbReference type="EMDB" id="EMD-8617"/>
<dbReference type="EMDB" id="EMD-8618"/>
<dbReference type="EMDB" id="EMD-8619"/>
<dbReference type="EMDB" id="EMD-8620"/>
<dbReference type="EMDB" id="EMD-8813"/>
<dbReference type="EMDB" id="EMD-8814"/>
<dbReference type="EMDB" id="EMD-8815"/>
<dbReference type="EMDB" id="EMD-8828"/>
<dbReference type="SMR" id="P62399"/>
<dbReference type="BioGRID" id="4263384">
    <property type="interactions" value="45"/>
</dbReference>
<dbReference type="BioGRID" id="852112">
    <property type="interactions" value="3"/>
</dbReference>
<dbReference type="ComplexPortal" id="CPX-3807">
    <property type="entry name" value="50S large ribosomal subunit"/>
</dbReference>
<dbReference type="DIP" id="DIP-35914N"/>
<dbReference type="FunCoup" id="P62399">
    <property type="interactions" value="1128"/>
</dbReference>
<dbReference type="IntAct" id="P62399">
    <property type="interactions" value="87"/>
</dbReference>
<dbReference type="STRING" id="511145.b3308"/>
<dbReference type="iPTMnet" id="P62399"/>
<dbReference type="jPOST" id="P62399"/>
<dbReference type="PaxDb" id="511145-b3308"/>
<dbReference type="EnsemblBacteria" id="AAC76333">
    <property type="protein sequence ID" value="AAC76333"/>
    <property type="gene ID" value="b3308"/>
</dbReference>
<dbReference type="GeneID" id="93778679"/>
<dbReference type="GeneID" id="947800"/>
<dbReference type="KEGG" id="ecj:JW3270"/>
<dbReference type="KEGG" id="eco:b3308"/>
<dbReference type="KEGG" id="ecoc:C3026_17980"/>
<dbReference type="PATRIC" id="fig|1411691.4.peg.3423"/>
<dbReference type="EchoBASE" id="EB0861"/>
<dbReference type="eggNOG" id="COG0094">
    <property type="taxonomic scope" value="Bacteria"/>
</dbReference>
<dbReference type="HOGENOM" id="CLU_061015_2_1_6"/>
<dbReference type="InParanoid" id="P62399"/>
<dbReference type="OMA" id="PIGCAVT"/>
<dbReference type="OrthoDB" id="9806626at2"/>
<dbReference type="PhylomeDB" id="P62399"/>
<dbReference type="BioCyc" id="EcoCyc:EG10868-MONOMER"/>
<dbReference type="BioCyc" id="MetaCyc:EG10868-MONOMER"/>
<dbReference type="EvolutionaryTrace" id="P62399"/>
<dbReference type="PRO" id="PR:P62399"/>
<dbReference type="Proteomes" id="UP000000625">
    <property type="component" value="Chromosome"/>
</dbReference>
<dbReference type="GO" id="GO:0005737">
    <property type="term" value="C:cytoplasm"/>
    <property type="evidence" value="ECO:0000314"/>
    <property type="project" value="ComplexPortal"/>
</dbReference>
<dbReference type="GO" id="GO:0005829">
    <property type="term" value="C:cytosol"/>
    <property type="evidence" value="ECO:0000314"/>
    <property type="project" value="EcoCyc"/>
</dbReference>
<dbReference type="GO" id="GO:0022625">
    <property type="term" value="C:cytosolic large ribosomal subunit"/>
    <property type="evidence" value="ECO:0000314"/>
    <property type="project" value="EcoCyc"/>
</dbReference>
<dbReference type="GO" id="GO:0008097">
    <property type="term" value="F:5S rRNA binding"/>
    <property type="evidence" value="ECO:0000314"/>
    <property type="project" value="EcoCyc"/>
</dbReference>
<dbReference type="GO" id="GO:0003723">
    <property type="term" value="F:RNA binding"/>
    <property type="evidence" value="ECO:0000318"/>
    <property type="project" value="GO_Central"/>
</dbReference>
<dbReference type="GO" id="GO:0003735">
    <property type="term" value="F:structural constituent of ribosome"/>
    <property type="evidence" value="ECO:0000318"/>
    <property type="project" value="GO_Central"/>
</dbReference>
<dbReference type="GO" id="GO:0000049">
    <property type="term" value="F:tRNA binding"/>
    <property type="evidence" value="ECO:0007669"/>
    <property type="project" value="UniProtKB-UniRule"/>
</dbReference>
<dbReference type="GO" id="GO:0002181">
    <property type="term" value="P:cytoplasmic translation"/>
    <property type="evidence" value="ECO:0000303"/>
    <property type="project" value="ComplexPortal"/>
</dbReference>
<dbReference type="GO" id="GO:0000027">
    <property type="term" value="P:ribosomal large subunit assembly"/>
    <property type="evidence" value="ECO:0000315"/>
    <property type="project" value="EcoCyc"/>
</dbReference>
<dbReference type="GO" id="GO:0006412">
    <property type="term" value="P:translation"/>
    <property type="evidence" value="ECO:0000318"/>
    <property type="project" value="GO_Central"/>
</dbReference>
<dbReference type="FunFam" id="3.30.1440.10:FF:000001">
    <property type="entry name" value="50S ribosomal protein L5"/>
    <property type="match status" value="1"/>
</dbReference>
<dbReference type="Gene3D" id="3.30.1440.10">
    <property type="match status" value="1"/>
</dbReference>
<dbReference type="HAMAP" id="MF_01333_B">
    <property type="entry name" value="Ribosomal_uL5_B"/>
    <property type="match status" value="1"/>
</dbReference>
<dbReference type="InterPro" id="IPR002132">
    <property type="entry name" value="Ribosomal_uL5"/>
</dbReference>
<dbReference type="InterPro" id="IPR020930">
    <property type="entry name" value="Ribosomal_uL5_bac-type"/>
</dbReference>
<dbReference type="InterPro" id="IPR031309">
    <property type="entry name" value="Ribosomal_uL5_C"/>
</dbReference>
<dbReference type="InterPro" id="IPR020929">
    <property type="entry name" value="Ribosomal_uL5_CS"/>
</dbReference>
<dbReference type="InterPro" id="IPR022803">
    <property type="entry name" value="Ribosomal_uL5_dom_sf"/>
</dbReference>
<dbReference type="InterPro" id="IPR031310">
    <property type="entry name" value="Ribosomal_uL5_N"/>
</dbReference>
<dbReference type="NCBIfam" id="NF000585">
    <property type="entry name" value="PRK00010.1"/>
    <property type="match status" value="1"/>
</dbReference>
<dbReference type="PANTHER" id="PTHR11994">
    <property type="entry name" value="60S RIBOSOMAL PROTEIN L11-RELATED"/>
    <property type="match status" value="1"/>
</dbReference>
<dbReference type="Pfam" id="PF00281">
    <property type="entry name" value="Ribosomal_L5"/>
    <property type="match status" value="1"/>
</dbReference>
<dbReference type="Pfam" id="PF00673">
    <property type="entry name" value="Ribosomal_L5_C"/>
    <property type="match status" value="1"/>
</dbReference>
<dbReference type="PIRSF" id="PIRSF002161">
    <property type="entry name" value="Ribosomal_L5"/>
    <property type="match status" value="1"/>
</dbReference>
<dbReference type="SUPFAM" id="SSF55282">
    <property type="entry name" value="RL5-like"/>
    <property type="match status" value="1"/>
</dbReference>
<dbReference type="PROSITE" id="PS00358">
    <property type="entry name" value="RIBOSOMAL_L5"/>
    <property type="match status" value="1"/>
</dbReference>
<keyword id="KW-0002">3D-structure</keyword>
<keyword id="KW-0007">Acetylation</keyword>
<keyword id="KW-0903">Direct protein sequencing</keyword>
<keyword id="KW-1185">Reference proteome</keyword>
<keyword id="KW-0687">Ribonucleoprotein</keyword>
<keyword id="KW-0689">Ribosomal protein</keyword>
<keyword id="KW-0694">RNA-binding</keyword>
<keyword id="KW-0699">rRNA-binding</keyword>
<keyword id="KW-0820">tRNA-binding</keyword>
<feature type="initiator methionine" description="Removed" evidence="14">
    <location>
        <position position="1"/>
    </location>
</feature>
<feature type="chain" id="PRO_0000124925" description="Large ribosomal subunit protein uL5">
    <location>
        <begin position="2"/>
        <end position="179"/>
    </location>
</feature>
<feature type="modified residue" description="N6-acetyllysine" evidence="6">
    <location>
        <position position="3"/>
    </location>
</feature>
<feature type="sequence conflict" description="In Ref. 4; AA sequence." evidence="18" ref="4">
    <original>E</original>
    <variation>Q</variation>
    <location>
        <position position="94"/>
    </location>
</feature>
<feature type="sequence conflict" description="In Ref. 4; AA sequence." evidence="18" ref="4">
    <original>N</original>
    <variation>D</variation>
    <location>
        <position position="127"/>
    </location>
</feature>
<feature type="helix" evidence="21">
    <location>
        <begin position="5"/>
        <end position="10"/>
    </location>
</feature>
<feature type="helix" evidence="21">
    <location>
        <begin position="12"/>
        <end position="19"/>
    </location>
</feature>
<feature type="helix" evidence="21">
    <location>
        <begin position="25"/>
        <end position="27"/>
    </location>
</feature>
<feature type="strand" evidence="21">
    <location>
        <begin position="31"/>
        <end position="37"/>
    </location>
</feature>
<feature type="helix" evidence="22">
    <location>
        <begin position="41"/>
        <end position="44"/>
    </location>
</feature>
<feature type="strand" evidence="23">
    <location>
        <begin position="45"/>
        <end position="47"/>
    </location>
</feature>
<feature type="turn" evidence="20">
    <location>
        <begin position="49"/>
        <end position="53"/>
    </location>
</feature>
<feature type="helix" evidence="21">
    <location>
        <begin position="58"/>
        <end position="61"/>
    </location>
</feature>
<feature type="strand" evidence="22">
    <location>
        <begin position="66"/>
        <end position="69"/>
    </location>
</feature>
<feature type="turn" evidence="21">
    <location>
        <begin position="75"/>
        <end position="78"/>
    </location>
</feature>
<feature type="strand" evidence="21">
    <location>
        <begin position="88"/>
        <end position="91"/>
    </location>
</feature>
<feature type="helix" evidence="21">
    <location>
        <begin position="94"/>
        <end position="101"/>
    </location>
</feature>
<feature type="helix" evidence="20">
    <location>
        <begin position="103"/>
        <end position="107"/>
    </location>
</feature>
<feature type="helix" evidence="24">
    <location>
        <begin position="108"/>
        <end position="110"/>
    </location>
</feature>
<feature type="strand" evidence="24">
    <location>
        <begin position="111"/>
        <end position="113"/>
    </location>
</feature>
<feature type="strand" evidence="21">
    <location>
        <begin position="124"/>
        <end position="126"/>
    </location>
</feature>
<feature type="strand" evidence="21">
    <location>
        <begin position="128"/>
        <end position="131"/>
    </location>
</feature>
<feature type="helix" evidence="24">
    <location>
        <begin position="135"/>
        <end position="137"/>
    </location>
</feature>
<feature type="strand" evidence="19">
    <location>
        <begin position="138"/>
        <end position="141"/>
    </location>
</feature>
<feature type="strand" evidence="19">
    <location>
        <begin position="143"/>
        <end position="145"/>
    </location>
</feature>
<feature type="strand" evidence="21">
    <location>
        <begin position="153"/>
        <end position="159"/>
    </location>
</feature>
<feature type="helix" evidence="21">
    <location>
        <begin position="163"/>
        <end position="172"/>
    </location>
</feature>